<accession>O60674</accession>
<accession>O14636</accession>
<accession>O75297</accession>
<gene>
    <name evidence="40" type="primary">JAK2</name>
</gene>
<sequence length="1132" mass="130674">MGMACLTMTEMEGTSTSSIYQNGDISGNANSMKQIDPVLQVYLYHSLGKSEADYLTFPSGEYVAEEICIAASKACGITPVYHNMFALMSETERIWYPPNHVFHIDESTRHNVLYRIRFYFPRWYCSGSNRAYRHGISRGAEAPLLDDFVMSYLFAQWRHDFVHGWIKVPVTHETQEECLGMAVLDMMRIAKENDQTPLAIYNSISYKTFLPKCIRAKIQDYHILTRKRIRYRFRRFIQQFSQCKATARNLKLKYLINLETLQSAFYTEKFEVKEPGSGPSGEEIFATIIITGNGGIQWSRGKHKESETLTEQDLQLYCDFPNIIDVSIKQANQEGSNESRVVTIHKQDGKNLEIELSSLREALSFVSLIDGYYRLTADAHHYLCKEVAPPAVLENIQSNCHGPISMDFAISKLKKAGNQTGLYVLRCSPKDFNKYFLTFAVERENVIEYKHCLITKNENEEYNLSGTKKNFSSLKDLLNCYQMETVRSDNIIFQFTKCCPPKPKDKSNLLVFRTNGVSDVPTSPTLQRPTHMNQMVFHKIRNEDLIFNESLGQGTFTKIFKGVRREVGDYGQLHETEVLLKVLDKAHRNYSESFFEAASMMSKLSHKHLVLNYGVCVCGDENILVQEFVKFGSLDTYLKKNKNCINILWKLEVAKQLAWAMHFLEENTLIHGNVCAKNILLIREEDRKTGNPPFIKLSDPGISITVLPKDILQERIPWVPPECIENPKNLNLATDKWSFGTTLWEICSGGDKPLSALDSQRKLQFYEDRHQLPAPKWAELANLINNCMDYEPDFRPSFRAIIRDLNSLFTPDYELLTENDMLPNMRIGALGFSGAFEDRDPTQFEERHLKFLQQLGKGNFGSVEMCRYDPLQDNTGEVVAVKKLQHSTEEHLRDFEREIEILKSLQHDNIVKYKGVCYSAGRRNLKLIMEYLPYGSLRDYLQKHKERIDHIKLLQYTSQICKGMEYLGTKRYIHRDLATRNILVENENRVKIGDFGLTKVLPQDKEYYKVKEPGESPIFWYAPESLTESKFSVASDVWSFGVVLYELFTYIEKSKSPPAEFMRMIGNDKQGQMIVFHLIELLKNNGRLPRPDGCPDEIYMIMTECWNNNVNQRPSFRDLALRVDQIRDNMAG</sequence>
<comment type="function">
    <text evidence="9 10 23 24 28 29 32 33 35 36">Non-receptor tyrosine kinase involved in various processes such as cell growth, development, differentiation or histone modifications. Mediates essential signaling events in both innate and adaptive immunity. In the cytoplasm, plays a pivotal role in signal transduction via its association with type I receptors such as growth hormone (GHR), prolactin (PRLR), leptin (LEPR), erythropoietin (EPOR), thrombopoietin receptor (MPL/TPOR); or type II receptors including IFN-alpha, IFN-beta, IFN-gamma and multiple interleukins (PubMed:15690087, PubMed:7615558, PubMed:9657743, PubMed:15899890). Following ligand-binding to cell surface receptors, phosphorylates specific tyrosine residues on the cytoplasmic tails of the receptor, creating docking sites for STATs proteins (PubMed:15690087, PubMed:9618263). Subsequently, phosphorylates the STATs proteins once they are recruited to the receptor. Phosphorylated STATs then form homodimer or heterodimers and translocate to the nucleus to activate gene transcription. For example, cell stimulation with erythropoietin (EPO) during erythropoiesis leads to JAK2 autophosphorylation, activation, and its association with erythropoietin receptor (EPOR) that becomes phosphorylated in its cytoplasmic domain (PubMed:9657743). Then, STAT5 (STAT5A or STAT5B) is recruited, phosphorylated and activated by JAK2. Once activated, dimerized STAT5 translocates into the nucleus and promotes the transcription of several essential genes involved in the modulation of erythropoiesis. Part of a signaling cascade that is activated by increased cellular retinol and that leads to the activation of STAT5 (STAT5A or STAT5B) (PubMed:21368206). In addition, JAK2 mediates angiotensin-2-induced ARHGEF1 phosphorylation (PubMed:20098430). Plays a role in cell cycle by phosphorylating CDKN1B (PubMed:21423214). Cooperates with TEC through reciprocal phosphorylation to mediate cytokine-driven activation of FOS transcription. In the nucleus, plays a key role in chromatin by specifically mediating phosphorylation of 'Tyr-41' of histone H3 (H3Y41ph), a specific tag that promotes exclusion of CBX5 (HP1 alpha) from chromatin (PubMed:19783980). Up-regulates the potassium voltage-gated channel activity of KCNA3 (PubMed:25644777).</text>
</comment>
<comment type="catalytic activity">
    <reaction evidence="6 10 15 33 35">
        <text>L-tyrosyl-[protein] + ATP = O-phospho-L-tyrosyl-[protein] + ADP + H(+)</text>
        <dbReference type="Rhea" id="RHEA:10596"/>
        <dbReference type="Rhea" id="RHEA-COMP:10136"/>
        <dbReference type="Rhea" id="RHEA-COMP:20101"/>
        <dbReference type="ChEBI" id="CHEBI:15378"/>
        <dbReference type="ChEBI" id="CHEBI:30616"/>
        <dbReference type="ChEBI" id="CHEBI:46858"/>
        <dbReference type="ChEBI" id="CHEBI:61978"/>
        <dbReference type="ChEBI" id="CHEBI:456216"/>
        <dbReference type="EC" id="2.7.10.2"/>
    </reaction>
</comment>
<comment type="cofactor">
    <cofactor evidence="37">
        <name>Mg(2+)</name>
        <dbReference type="ChEBI" id="CHEBI:18420"/>
    </cofactor>
    <text evidence="39">Mn(2+) was used in the in vitro kinase assay but Mg(2+) is likely to be the in vivo cofactor.</text>
</comment>
<comment type="activity regulation">
    <text evidence="2 26">Regulated by autophosphorylation, can both activate or decrease activity (By similarity). Heme regulates its activity by enhancing the phosphorylation on Tyr-1007 and Tyr-1008 (PubMed:21036157).</text>
</comment>
<comment type="subunit">
    <text evidence="2 7 8 9 14 15 25 27 28 31 33 34">Interacts with EPOR, LYN, SIRPA, SH2B1 and TEC (By similarity). Interacts with IL23R (PubMed:12023369). Interacts with SKB1 (PubMed:10531356). Interacts with STAM2 (PubMed:10899310). Interacts with IFNGR2 (via intracellular domain) (PubMed:7615558, PubMed:7673114). Interacts with LEPR (Isoform B) (By similarity). Interacts with HSP90AB1; promotes functional activation in a heat shock-dependent manner (PubMed:20353823). Interacts with STRA6 (PubMed:21368206). Interacts with RHEX; this interaction occurs in a erythropoietin (EPO)-dependent manner (PubMed:25092874). Interacts with ASB2; the interaction targets JAK2 for Notch-induced proteasomal degradation (PubMed:21119685). Interacts with MPL/TPOR (PubMed:15899890).</text>
</comment>
<comment type="interaction">
    <interactant intactId="EBI-518647">
        <id>O60674</id>
    </interactant>
    <interactant intactId="EBI-1809771">
        <id>P32927</id>
        <label>CSF2RB</label>
    </interactant>
    <organismsDiffer>false</organismsDiffer>
    <experiments>4</experiments>
</comment>
<comment type="interaction">
    <interactant intactId="EBI-518647">
        <id>O60674</id>
    </interactant>
    <interactant intactId="EBI-1759442">
        <id>Q01344</id>
        <label>IL5RA</label>
    </interactant>
    <organismsDiffer>false</organismsDiffer>
    <experiments>2</experiments>
</comment>
<comment type="interaction">
    <interactant intactId="EBI-518647">
        <id>O60674</id>
    </interactant>
    <interactant intactId="EBI-1383438">
        <id>P23458</id>
        <label>JAK1</label>
    </interactant>
    <organismsDiffer>false</organismsDiffer>
    <experiments>4</experiments>
</comment>
<comment type="interaction">
    <interactant intactId="EBI-518647">
        <id>O60674</id>
    </interactant>
    <interactant intactId="EBI-518647">
        <id>O60674</id>
        <label>JAK2</label>
    </interactant>
    <organismsDiffer>false</organismsDiffer>
    <experiments>7</experiments>
</comment>
<comment type="interaction">
    <interactant intactId="EBI-518647">
        <id>O60674</id>
    </interactant>
    <interactant intactId="EBI-6511486">
        <id>P40238</id>
        <label>MPL</label>
    </interactant>
    <organismsDiffer>false</organismsDiffer>
    <experiments>6</experiments>
</comment>
<comment type="interaction">
    <interactant intactId="EBI-518647">
        <id>O60674</id>
    </interactant>
    <interactant intactId="EBI-389883">
        <id>P16333</id>
        <label>NCK1</label>
    </interactant>
    <organismsDiffer>false</organismsDiffer>
    <experiments>2</experiments>
</comment>
<comment type="interaction">
    <interactant intactId="EBI-518647">
        <id>O60674</id>
    </interactant>
    <interactant intactId="EBI-968788">
        <id>P18031</id>
        <label>PTPN1</label>
    </interactant>
    <organismsDiffer>false</organismsDiffer>
    <experiments>5</experiments>
</comment>
<comment type="interaction">
    <interactant intactId="EBI-518647">
        <id>O60674</id>
    </interactant>
    <interactant intactId="EBI-366288">
        <id>O75116</id>
        <label>ROCK2</label>
    </interactant>
    <organismsDiffer>false</organismsDiffer>
    <experiments>2</experiments>
</comment>
<comment type="interaction">
    <interactant intactId="EBI-518647">
        <id>O60674</id>
    </interactant>
    <interactant intactId="EBI-1383454">
        <id>P29597</id>
        <label>TYK2</label>
    </interactant>
    <organismsDiffer>false</organismsDiffer>
    <experiments>2</experiments>
</comment>
<comment type="interaction">
    <interactant intactId="EBI-518647">
        <id>O60674</id>
    </interactant>
    <interactant intactId="EBI-2931424">
        <id>Q9JHI9</id>
        <label>Slc40a1</label>
    </interactant>
    <organismsDiffer>true</organismsDiffer>
    <experiments>3</experiments>
</comment>
<comment type="subcellular location">
    <subcellularLocation>
        <location evidence="1">Endomembrane system</location>
        <topology evidence="1">Peripheral membrane protein</topology>
    </subcellularLocation>
    <subcellularLocation>
        <location evidence="23">Cytoplasm</location>
    </subcellularLocation>
    <subcellularLocation>
        <location evidence="23">Nucleus</location>
    </subcellularLocation>
</comment>
<comment type="tissue specificity">
    <text evidence="18">Ubiquitously expressed throughout most tissues.</text>
</comment>
<comment type="domain">
    <text evidence="1">Possesses 2 protein kinase domains. The second one probably contains the catalytic domain, while the presence of slight differences suggest a different role for protein kinase 1 (By similarity).</text>
</comment>
<comment type="PTM">
    <text evidence="2 28 33 34">Autophosphorylated, leading to regulate its activity. Leptin promotes phosphorylation on tyrosine residues, including phosphorylation on Tyr-813 (By similarity). Autophosphorylation on Tyr-119 in response to EPO down-regulates its kinase activity (By similarity). Autophosphorylation on Tyr-868, Tyr-966 and Tyr-972 in response to growth hormone (GH) are required for maximal kinase activity (By similarity). Also phosphorylated by TEC (By similarity). Phosphorylated on tyrosine residues in response to interferon gamma signaling (PubMed:7615558, PubMed:7673114). Phosphorylated on tyrosine residues in response to a signaling cascade that is activated by increased cellular retinol (PubMed:21368206).</text>
</comment>
<comment type="PTM">
    <text evidence="27">Undergoes Notch-induced ubiquitination and subsequent proteasomal degradation which is mediated by ASB1 or ASB2, the substrate-recognition components of probable ECS E3 ubiquitin-protein ligase complexes.</text>
</comment>
<comment type="disease">
    <text>Chromosomal aberrations involving JAK2 are found in both chronic and acute forms of eosinophilic, lymphoblastic and myeloid leukemia. Translocation t(8;9)(p22;p24) with PCM1 links the protein kinase domain of JAK2 to the major portion of PCM1. Translocation t(9;12)(p24;p13) with ETV6.</text>
</comment>
<comment type="disease" evidence="20">
    <disease id="DI-01300">
        <name>Budd-Chiari syndrome</name>
        <acronym>BDCHS</acronym>
        <description>A syndrome caused by obstruction of hepatic venous outflow involving either the hepatic veins or the terminal segment of the inferior vena cava. Obstructions are generally caused by thrombosis and lead to hepatic congestion and ischemic necrosis. Clinical manifestations observed in the majority of patients include hepatomegaly, right upper quadrant pain and abdominal ascites. Budd-Chiari syndrome is associated with a combination of disease states including primary myeloproliferative syndromes and thrombophilia due to factor V Leiden, protein C deficiency and antithrombin III deficiency. Budd-Chiari syndrome is a rare but typical complication in patients with polycythemia vera.</description>
        <dbReference type="MIM" id="600880"/>
    </disease>
    <text>Disease susceptibility is associated with variants affecting the gene represented in this entry.</text>
</comment>
<comment type="disease" evidence="11 12 13 19 32">
    <disease id="DI-02712">
        <name>Polycythemia vera</name>
        <acronym>PV</acronym>
        <description>A myeloproliferative disorder characterized by abnormal proliferation of all hematopoietic bone marrow elements, erythroid hyperplasia, an absolute increase in total blood volume, but also by myeloid leukocytosis, thrombocytosis and splenomegaly.</description>
        <dbReference type="MIM" id="263300"/>
    </disease>
    <text>The disease is caused by variants affecting the gene represented in this entry.</text>
</comment>
<comment type="disease" evidence="17 30">
    <disease id="DI-03402">
        <name>Thrombocythemia 3</name>
        <acronym>THCYT3</acronym>
        <description>A myeloproliferative disorder characterized by excessive platelet production, resulting in increased numbers of circulating platelets. It can be associated with spontaneous hemorrhages and thrombotic episodes.</description>
        <dbReference type="MIM" id="614521"/>
    </disease>
    <text>The disease may be caused by variants affecting the gene represented in this entry.</text>
</comment>
<comment type="disease">
    <disease id="DI-02746">
        <name>Myelofibrosis</name>
        <acronym>MYELOF</acronym>
        <description>A disorder characterized by replacement of the bone marrow by fibrous tissue, occurring in association with a myeloproliferative disorder. Clinical manifestations may include anemia, pallor, splenomegaly, hypermetabolic state, petechiae, ecchymosis, bleeding, lymphadenopathy, hepatomegaly, portal hypertension.</description>
        <dbReference type="MIM" id="254450"/>
    </disease>
    <text>The disease is caused by variants affecting the gene represented in this entry.</text>
</comment>
<comment type="disease" evidence="16">
    <disease id="DI-01171">
        <name>Leukemia, acute myelogenous</name>
        <acronym>AML</acronym>
        <description>A subtype of acute leukemia, a cancer of the white blood cells. AML is a malignant disease of bone marrow characterized by maturational arrest of hematopoietic precursors at an early stage of development. Clonal expansion of myeloid blasts occurs in bone marrow, blood, and other tissue. Myelogenous leukemias develop from changes in cells that normally produce neutrophils, basophils, eosinophils and monocytes.</description>
        <dbReference type="MIM" id="601626"/>
    </disease>
    <text>The disease is caused by variants affecting the gene represented in this entry.</text>
</comment>
<comment type="similarity">
    <text evidence="4">Belongs to the protein kinase superfamily. Tyr protein kinase family. JAK subfamily.</text>
</comment>
<comment type="online information" name="Atlas of Genetics and Cytogenetics in Oncology and Haematology">
    <link uri="https://atlasgeneticsoncology.org/gene/98/JAK"/>
</comment>
<feature type="chain" id="PRO_0000088112" description="Tyrosine-protein kinase JAK2">
    <location>
        <begin position="1"/>
        <end position="1132"/>
    </location>
</feature>
<feature type="domain" description="FERM" evidence="3">
    <location>
        <begin position="37"/>
        <end position="380"/>
    </location>
</feature>
<feature type="domain" description="SH2; atypical" evidence="5">
    <location>
        <begin position="401"/>
        <end position="482"/>
    </location>
</feature>
<feature type="domain" description="Protein kinase 1" evidence="4">
    <location>
        <begin position="545"/>
        <end position="809"/>
    </location>
</feature>
<feature type="domain" description="Protein kinase 2" evidence="4">
    <location>
        <begin position="849"/>
        <end position="1124"/>
    </location>
</feature>
<feature type="region of interest" description="Interaction with cytokine/interferon/growth hormone receptors" evidence="1">
    <location>
        <begin position="1"/>
        <end position="239"/>
    </location>
</feature>
<feature type="active site" description="Proton acceptor" evidence="4 6">
    <location>
        <position position="976"/>
    </location>
</feature>
<feature type="binding site" evidence="4">
    <location>
        <begin position="855"/>
        <end position="863"/>
    </location>
    <ligand>
        <name>ATP</name>
        <dbReference type="ChEBI" id="CHEBI:30616"/>
    </ligand>
</feature>
<feature type="binding site" evidence="4">
    <location>
        <position position="882"/>
    </location>
    <ligand>
        <name>ATP</name>
        <dbReference type="ChEBI" id="CHEBI:30616"/>
    </ligand>
</feature>
<feature type="site" description="Breakpoint for translocation to form PCM1-JAK2 fusion protein">
    <location>
        <begin position="352"/>
        <end position="353"/>
    </location>
</feature>
<feature type="site" description="Breakpoint for translocation to form PCM1-JAK2 fusion protein">
    <location>
        <begin position="442"/>
        <end position="443"/>
    </location>
</feature>
<feature type="site" description="Breakpoint for translocation to form PCM1-JAK2 fusion protein">
    <location>
        <begin position="450"/>
        <end position="451"/>
    </location>
</feature>
<feature type="site" description="Breakpoint for translocation to form PCM1-JAK2 fusion protein">
    <location>
        <begin position="504"/>
        <end position="505"/>
    </location>
</feature>
<feature type="site" description="Breakpoint for translocation to form PCM1-JAK2 fusion protein">
    <location>
        <begin position="710"/>
        <end position="711"/>
    </location>
</feature>
<feature type="modified residue" description="Phosphotyrosine; by autocatalysis" evidence="2">
    <location>
        <position position="119"/>
    </location>
</feature>
<feature type="modified residue" description="Phosphotyrosine" evidence="2">
    <location>
        <position position="372"/>
    </location>
</feature>
<feature type="modified residue" description="Phosphotyrosine" evidence="2">
    <location>
        <position position="373"/>
    </location>
</feature>
<feature type="modified residue" description="Phosphoserine" evidence="2">
    <location>
        <position position="523"/>
    </location>
</feature>
<feature type="modified residue" description="Phosphotyrosine" evidence="41">
    <location>
        <position position="570"/>
    </location>
</feature>
<feature type="modified residue" description="Phosphotyrosine" evidence="2">
    <location>
        <position position="813"/>
    </location>
</feature>
<feature type="modified residue" description="Phosphotyrosine; by autocatalysis" evidence="2">
    <location>
        <position position="868"/>
    </location>
</feature>
<feature type="modified residue" description="Phosphotyrosine; by autocatalysis" evidence="2">
    <location>
        <position position="966"/>
    </location>
</feature>
<feature type="modified residue" description="Phosphotyrosine; by autocatalysis" evidence="2">
    <location>
        <position position="972"/>
    </location>
</feature>
<feature type="modified residue" description="Phosphotyrosine; by autocatalysis" evidence="15">
    <location>
        <position position="1007"/>
    </location>
</feature>
<feature type="modified residue" description="Phosphotyrosine; by autocatalysis" evidence="38">
    <location>
        <position position="1008"/>
    </location>
</feature>
<feature type="sequence variant" id="VAR_041716" description="In dbSNP:rs56118985." evidence="22">
    <original>G</original>
    <variation>D</variation>
    <location>
        <position position="127"/>
    </location>
</feature>
<feature type="sequence variant" id="VAR_041717" description="In an ovarian serous carcinoma sample; somatic mutation." evidence="22">
    <original>K</original>
    <variation>Q</variation>
    <location>
        <position position="191"/>
    </location>
</feature>
<feature type="sequence variant" id="VAR_041718" description="In dbSNP:rs55667734." evidence="22">
    <original>K</original>
    <variation>R</variation>
    <location>
        <position position="346"/>
    </location>
</feature>
<feature type="sequence variant" id="VAR_041719" description="In dbSNP:rs55953208." evidence="22">
    <original>A</original>
    <variation>E</variation>
    <location>
        <position position="377"/>
    </location>
</feature>
<feature type="sequence variant" id="VAR_041720" description="In dbSNP:rs2230723." evidence="22">
    <original>L</original>
    <variation>V</variation>
    <location>
        <position position="393"/>
    </location>
</feature>
<feature type="sequence variant" id="VAR_032693" description="In myeloproliferative disorder with erythrocytosis." evidence="21">
    <original>FHK</original>
    <variation>L</variation>
    <location>
        <begin position="537"/>
        <end position="539"/>
    </location>
</feature>
<feature type="sequence variant" id="VAR_032694" description="In myeloproliferative disorder with erythrocytosis." evidence="21">
    <original>HK</original>
    <variation>QL</variation>
    <location>
        <begin position="538"/>
        <end position="539"/>
    </location>
</feature>
<feature type="sequence variant" id="VAR_032695" description="In myeloproliferative disorder with erythrocytosis; requires 2 nucleotide substitutions; dbSNP:rs121912473." evidence="21">
    <original>K</original>
    <variation>L</variation>
    <location>
        <position position="539"/>
    </location>
</feature>
<feature type="sequence variant" id="VAR_043129" description="In dbSNP:rs17490221.">
    <original>D</original>
    <variation>E</variation>
    <location>
        <position position="584"/>
    </location>
</feature>
<feature type="sequence variant" id="VAR_032696" description="In AML; dbSNP:rs121912472." evidence="16">
    <original>K</original>
    <variation>N</variation>
    <location>
        <position position="607"/>
    </location>
</feature>
<feature type="sequence variant" id="VAR_032697" description="In PV, THCYT3 and AML; risk factor for Budd-Chiari syndrome; somatic mutation in a high percentage of patients with essential thrombocythemia or myelofibrosis; leads to constitutive tyrosine phosphorylation activity that promotes cytokine hypersensitivity; no effect on its ability to up-regulate potassium voltage-gated channel activity of KCNA3; dbSNP:rs77375493." evidence="11 12 13 16 17 19 32">
    <original>V</original>
    <variation>F</variation>
    <location>
        <position position="617"/>
    </location>
</feature>
<feature type="sequence variant" id="VAR_067534" description="In THCYT3; dbSNP:rs77375493." evidence="30">
    <original>V</original>
    <variation>I</variation>
    <location>
        <position position="617"/>
    </location>
</feature>
<feature type="sequence variant" id="VAR_041721" description="In dbSNP:rs41316003." evidence="22">
    <original>R</original>
    <variation>H</variation>
    <location>
        <position position="1063"/>
    </location>
</feature>
<feature type="mutagenesis site" description="Loss of ability to up-regulate potassium voltage-gated channel activity of KCNA3." evidence="32">
    <original>K</original>
    <variation>E</variation>
    <location>
        <position position="882"/>
    </location>
</feature>
<feature type="sequence conflict" description="In Ref. 1; AAC23982." evidence="37" ref="1">
    <original>P</original>
    <variation>S</variation>
    <location>
        <position position="321"/>
    </location>
</feature>
<feature type="sequence conflict" description="In Ref. 2; AAC23653." evidence="37" ref="2">
    <original>I</original>
    <variation>V</variation>
    <location>
        <position position="1126"/>
    </location>
</feature>
<feature type="strand" evidence="47">
    <location>
        <begin position="38"/>
        <end position="45"/>
    </location>
</feature>
<feature type="turn" evidence="47">
    <location>
        <begin position="47"/>
        <end position="49"/>
    </location>
</feature>
<feature type="strand" evidence="47">
    <location>
        <begin position="50"/>
        <end position="55"/>
    </location>
</feature>
<feature type="strand" evidence="47">
    <location>
        <begin position="59"/>
        <end position="63"/>
    </location>
</feature>
<feature type="helix" evidence="47">
    <location>
        <begin position="64"/>
        <end position="75"/>
    </location>
</feature>
<feature type="turn" evidence="47">
    <location>
        <begin position="79"/>
        <end position="81"/>
    </location>
</feature>
<feature type="helix" evidence="47">
    <location>
        <begin position="82"/>
        <end position="84"/>
    </location>
</feature>
<feature type="strand" evidence="47">
    <location>
        <begin position="85"/>
        <end position="89"/>
    </location>
</feature>
<feature type="turn" evidence="47">
    <location>
        <begin position="90"/>
        <end position="92"/>
    </location>
</feature>
<feature type="strand" evidence="47">
    <location>
        <begin position="101"/>
        <end position="104"/>
    </location>
</feature>
<feature type="strand" evidence="47">
    <location>
        <begin position="109"/>
        <end position="116"/>
    </location>
</feature>
<feature type="strand" evidence="47">
    <location>
        <begin position="123"/>
        <end position="125"/>
    </location>
</feature>
<feature type="strand" evidence="47">
    <location>
        <begin position="127"/>
        <end position="129"/>
    </location>
</feature>
<feature type="strand" evidence="47">
    <location>
        <begin position="131"/>
        <end position="134"/>
    </location>
</feature>
<feature type="turn" evidence="44">
    <location>
        <begin position="136"/>
        <end position="139"/>
    </location>
</feature>
<feature type="helix" evidence="47">
    <location>
        <begin position="147"/>
        <end position="162"/>
    </location>
</feature>
<feature type="helix" evidence="47">
    <location>
        <begin position="172"/>
        <end position="193"/>
    </location>
</feature>
<feature type="helix" evidence="47">
    <location>
        <begin position="197"/>
        <end position="203"/>
    </location>
</feature>
<feature type="helix" evidence="47">
    <location>
        <begin position="206"/>
        <end position="209"/>
    </location>
</feature>
<feature type="helix" evidence="47">
    <location>
        <begin position="212"/>
        <end position="219"/>
    </location>
</feature>
<feature type="helix" evidence="47">
    <location>
        <begin position="223"/>
        <end position="240"/>
    </location>
</feature>
<feature type="helix" evidence="47">
    <location>
        <begin position="247"/>
        <end position="261"/>
    </location>
</feature>
<feature type="helix" evidence="47">
    <location>
        <begin position="263"/>
        <end position="266"/>
    </location>
</feature>
<feature type="strand" evidence="47">
    <location>
        <begin position="268"/>
        <end position="273"/>
    </location>
</feature>
<feature type="strand" evidence="47">
    <location>
        <begin position="285"/>
        <end position="291"/>
    </location>
</feature>
<feature type="turn" evidence="47">
    <location>
        <begin position="292"/>
        <end position="294"/>
    </location>
</feature>
<feature type="strand" evidence="47">
    <location>
        <begin position="295"/>
        <end position="301"/>
    </location>
</feature>
<feature type="helix" evidence="47">
    <location>
        <begin position="311"/>
        <end position="313"/>
    </location>
</feature>
<feature type="strand" evidence="47">
    <location>
        <begin position="315"/>
        <end position="318"/>
    </location>
</feature>
<feature type="helix" evidence="47">
    <location>
        <begin position="320"/>
        <end position="322"/>
    </location>
</feature>
<feature type="strand" evidence="47">
    <location>
        <begin position="323"/>
        <end position="330"/>
    </location>
</feature>
<feature type="strand" evidence="47">
    <location>
        <begin position="340"/>
        <end position="349"/>
    </location>
</feature>
<feature type="strand" evidence="47">
    <location>
        <begin position="352"/>
        <end position="358"/>
    </location>
</feature>
<feature type="helix" evidence="47">
    <location>
        <begin position="359"/>
        <end position="376"/>
    </location>
</feature>
<feature type="helix" evidence="47">
    <location>
        <begin position="385"/>
        <end position="387"/>
    </location>
</feature>
<feature type="helix" evidence="47">
    <location>
        <begin position="390"/>
        <end position="398"/>
    </location>
</feature>
<feature type="helix" evidence="47">
    <location>
        <begin position="406"/>
        <end position="415"/>
    </location>
</feature>
<feature type="strand" evidence="47">
    <location>
        <begin position="422"/>
        <end position="427"/>
    </location>
</feature>
<feature type="strand" evidence="47">
    <location>
        <begin position="434"/>
        <end position="443"/>
    </location>
</feature>
<feature type="strand" evidence="47">
    <location>
        <begin position="446"/>
        <end position="456"/>
    </location>
</feature>
<feature type="strand" evidence="47">
    <location>
        <begin position="462"/>
        <end position="464"/>
    </location>
</feature>
<feature type="strand" evidence="47">
    <location>
        <begin position="471"/>
        <end position="473"/>
    </location>
</feature>
<feature type="helix" evidence="47">
    <location>
        <begin position="474"/>
        <end position="481"/>
    </location>
</feature>
<feature type="strand" evidence="47">
    <location>
        <begin position="485"/>
        <end position="488"/>
    </location>
</feature>
<feature type="strand" evidence="47">
    <location>
        <begin position="491"/>
        <end position="494"/>
    </location>
</feature>
<feature type="strand" evidence="47">
    <location>
        <begin position="510"/>
        <end position="513"/>
    </location>
</feature>
<feature type="strand" evidence="54">
    <location>
        <begin position="539"/>
        <end position="541"/>
    </location>
</feature>
<feature type="helix" evidence="51">
    <location>
        <begin position="542"/>
        <end position="544"/>
    </location>
</feature>
<feature type="strand" evidence="51">
    <location>
        <begin position="545"/>
        <end position="554"/>
    </location>
</feature>
<feature type="strand" evidence="51">
    <location>
        <begin position="557"/>
        <end position="567"/>
    </location>
</feature>
<feature type="helix" evidence="51">
    <location>
        <begin position="569"/>
        <end position="571"/>
    </location>
</feature>
<feature type="strand" evidence="51">
    <location>
        <begin position="573"/>
        <end position="583"/>
    </location>
</feature>
<feature type="helix" evidence="51">
    <location>
        <begin position="585"/>
        <end position="590"/>
    </location>
</feature>
<feature type="helix" evidence="51">
    <location>
        <begin position="591"/>
        <end position="603"/>
    </location>
</feature>
<feature type="strand" evidence="51">
    <location>
        <begin position="612"/>
        <end position="616"/>
    </location>
</feature>
<feature type="helix" evidence="48">
    <location>
        <begin position="618"/>
        <end position="620"/>
    </location>
</feature>
<feature type="strand" evidence="51">
    <location>
        <begin position="623"/>
        <end position="627"/>
    </location>
</feature>
<feature type="helix" evidence="51">
    <location>
        <begin position="634"/>
        <end position="640"/>
    </location>
</feature>
<feature type="turn" evidence="51">
    <location>
        <begin position="641"/>
        <end position="644"/>
    </location>
</feature>
<feature type="helix" evidence="51">
    <location>
        <begin position="647"/>
        <end position="666"/>
    </location>
</feature>
<feature type="helix" evidence="51">
    <location>
        <begin position="676"/>
        <end position="678"/>
    </location>
</feature>
<feature type="strand" evidence="51">
    <location>
        <begin position="679"/>
        <end position="683"/>
    </location>
</feature>
<feature type="turn" evidence="51">
    <location>
        <begin position="687"/>
        <end position="689"/>
    </location>
</feature>
<feature type="strand" evidence="51">
    <location>
        <begin position="694"/>
        <end position="697"/>
    </location>
</feature>
<feature type="helix" evidence="51">
    <location>
        <begin position="704"/>
        <end position="706"/>
    </location>
</feature>
<feature type="helix" evidence="51">
    <location>
        <begin position="709"/>
        <end position="714"/>
    </location>
</feature>
<feature type="turn" evidence="51">
    <location>
        <begin position="715"/>
        <end position="718"/>
    </location>
</feature>
<feature type="helix" evidence="51">
    <location>
        <begin position="721"/>
        <end position="723"/>
    </location>
</feature>
<feature type="helix" evidence="51">
    <location>
        <begin position="727"/>
        <end position="729"/>
    </location>
</feature>
<feature type="helix" evidence="51">
    <location>
        <begin position="732"/>
        <end position="747"/>
    </location>
</feature>
<feature type="turn" evidence="51">
    <location>
        <begin position="748"/>
        <end position="750"/>
    </location>
</feature>
<feature type="turn" evidence="51">
    <location>
        <begin position="753"/>
        <end position="756"/>
    </location>
</feature>
<feature type="helix" evidence="51">
    <location>
        <begin position="759"/>
        <end position="767"/>
    </location>
</feature>
<feature type="helix" evidence="51">
    <location>
        <begin position="778"/>
        <end position="787"/>
    </location>
</feature>
<feature type="helix" evidence="51">
    <location>
        <begin position="792"/>
        <end position="794"/>
    </location>
</feature>
<feature type="helix" evidence="51">
    <location>
        <begin position="798"/>
        <end position="808"/>
    </location>
</feature>
<feature type="strand" evidence="42">
    <location>
        <begin position="836"/>
        <end position="838"/>
    </location>
</feature>
<feature type="turn" evidence="46">
    <location>
        <begin position="841"/>
        <end position="843"/>
    </location>
</feature>
<feature type="helix" evidence="53">
    <location>
        <begin position="846"/>
        <end position="848"/>
    </location>
</feature>
<feature type="strand" evidence="53">
    <location>
        <begin position="849"/>
        <end position="857"/>
    </location>
</feature>
<feature type="strand" evidence="53">
    <location>
        <begin position="859"/>
        <end position="868"/>
    </location>
</feature>
<feature type="strand" evidence="49">
    <location>
        <begin position="872"/>
        <end position="874"/>
    </location>
</feature>
<feature type="strand" evidence="53">
    <location>
        <begin position="876"/>
        <end position="886"/>
    </location>
</feature>
<feature type="helix" evidence="53">
    <location>
        <begin position="889"/>
        <end position="903"/>
    </location>
</feature>
<feature type="strand" evidence="53">
    <location>
        <begin position="913"/>
        <end position="917"/>
    </location>
</feature>
<feature type="helix" evidence="53">
    <location>
        <begin position="919"/>
        <end position="922"/>
    </location>
</feature>
<feature type="strand" evidence="53">
    <location>
        <begin position="926"/>
        <end position="930"/>
    </location>
</feature>
<feature type="helix" evidence="53">
    <location>
        <begin position="937"/>
        <end position="943"/>
    </location>
</feature>
<feature type="helix" evidence="53">
    <location>
        <begin position="945"/>
        <end position="947"/>
    </location>
</feature>
<feature type="helix" evidence="53">
    <location>
        <begin position="950"/>
        <end position="969"/>
    </location>
</feature>
<feature type="helix" evidence="53">
    <location>
        <begin position="979"/>
        <end position="981"/>
    </location>
</feature>
<feature type="strand" evidence="53">
    <location>
        <begin position="982"/>
        <end position="986"/>
    </location>
</feature>
<feature type="strand" evidence="53">
    <location>
        <begin position="989"/>
        <end position="992"/>
    </location>
</feature>
<feature type="helix" evidence="50">
    <location>
        <begin position="995"/>
        <end position="997"/>
    </location>
</feature>
<feature type="strand" evidence="52">
    <location>
        <begin position="1006"/>
        <end position="1009"/>
    </location>
</feature>
<feature type="helix" evidence="53">
    <location>
        <begin position="1018"/>
        <end position="1020"/>
    </location>
</feature>
<feature type="helix" evidence="53">
    <location>
        <begin position="1023"/>
        <end position="1028"/>
    </location>
</feature>
<feature type="strand" evidence="43">
    <location>
        <begin position="1030"/>
        <end position="1032"/>
    </location>
</feature>
<feature type="helix" evidence="53">
    <location>
        <begin position="1033"/>
        <end position="1049"/>
    </location>
</feature>
<feature type="helix" evidence="43">
    <location>
        <begin position="1053"/>
        <end position="1055"/>
    </location>
</feature>
<feature type="helix" evidence="53">
    <location>
        <begin position="1057"/>
        <end position="1065"/>
    </location>
</feature>
<feature type="strand" evidence="45">
    <location>
        <begin position="1069"/>
        <end position="1071"/>
    </location>
</feature>
<feature type="helix" evidence="53">
    <location>
        <begin position="1072"/>
        <end position="1083"/>
    </location>
</feature>
<feature type="turn" evidence="45">
    <location>
        <begin position="1084"/>
        <end position="1086"/>
    </location>
</feature>
<feature type="helix" evidence="53">
    <location>
        <begin position="1096"/>
        <end position="1105"/>
    </location>
</feature>
<feature type="helix" evidence="53">
    <location>
        <begin position="1110"/>
        <end position="1112"/>
    </location>
</feature>
<feature type="helix" evidence="53">
    <location>
        <begin position="1116"/>
        <end position="1129"/>
    </location>
</feature>
<dbReference type="EC" id="2.7.10.2" evidence="10 15 33 35 36"/>
<dbReference type="EMBL" id="AF058925">
    <property type="protein sequence ID" value="AAC23982.1"/>
    <property type="molecule type" value="mRNA"/>
</dbReference>
<dbReference type="EMBL" id="AF001362">
    <property type="protein sequence ID" value="AAC23653.1"/>
    <property type="molecule type" value="mRNA"/>
</dbReference>
<dbReference type="EMBL" id="AF005216">
    <property type="protein sequence ID" value="AAB82092.1"/>
    <property type="molecule type" value="mRNA"/>
</dbReference>
<dbReference type="EMBL" id="AL161450">
    <property type="status" value="NOT_ANNOTATED_CDS"/>
    <property type="molecule type" value="Genomic_DNA"/>
</dbReference>
<dbReference type="CCDS" id="CCDS6457.1"/>
<dbReference type="PIR" id="JW0091">
    <property type="entry name" value="JW0091"/>
</dbReference>
<dbReference type="RefSeq" id="NP_001309123.1">
    <property type="nucleotide sequence ID" value="NM_001322194.2"/>
</dbReference>
<dbReference type="RefSeq" id="NP_001309124.1">
    <property type="nucleotide sequence ID" value="NM_001322195.2"/>
</dbReference>
<dbReference type="RefSeq" id="NP_001309125.1">
    <property type="nucleotide sequence ID" value="NM_001322196.2"/>
</dbReference>
<dbReference type="RefSeq" id="NP_001309133.1">
    <property type="nucleotide sequence ID" value="NM_001322204.1"/>
</dbReference>
<dbReference type="RefSeq" id="NP_004963.1">
    <property type="nucleotide sequence ID" value="NM_004972.4"/>
</dbReference>
<dbReference type="PDB" id="2B7A">
    <property type="method" value="X-ray"/>
    <property type="resolution" value="2.00 A"/>
    <property type="chains" value="A/B=840-1132"/>
</dbReference>
<dbReference type="PDB" id="2W1I">
    <property type="method" value="X-ray"/>
    <property type="resolution" value="2.60 A"/>
    <property type="chains" value="A/B=835-1132"/>
</dbReference>
<dbReference type="PDB" id="2XA4">
    <property type="method" value="X-ray"/>
    <property type="resolution" value="2.04 A"/>
    <property type="chains" value="A/B=835-1132"/>
</dbReference>
<dbReference type="PDB" id="3E62">
    <property type="method" value="X-ray"/>
    <property type="resolution" value="1.92 A"/>
    <property type="chains" value="A=839-1131"/>
</dbReference>
<dbReference type="PDB" id="3E63">
    <property type="method" value="X-ray"/>
    <property type="resolution" value="1.90 A"/>
    <property type="chains" value="A=839-1131"/>
</dbReference>
<dbReference type="PDB" id="3E64">
    <property type="method" value="X-ray"/>
    <property type="resolution" value="1.80 A"/>
    <property type="chains" value="A=839-1131"/>
</dbReference>
<dbReference type="PDB" id="3FUP">
    <property type="method" value="X-ray"/>
    <property type="resolution" value="2.40 A"/>
    <property type="chains" value="A/B=840-1132"/>
</dbReference>
<dbReference type="PDB" id="3IO7">
    <property type="method" value="X-ray"/>
    <property type="resolution" value="2.60 A"/>
    <property type="chains" value="A=842-1132"/>
</dbReference>
<dbReference type="PDB" id="3IOK">
    <property type="method" value="X-ray"/>
    <property type="resolution" value="2.10 A"/>
    <property type="chains" value="A=842-1132"/>
</dbReference>
<dbReference type="PDB" id="3JY9">
    <property type="method" value="X-ray"/>
    <property type="resolution" value="2.10 A"/>
    <property type="chains" value="A=842-1130"/>
</dbReference>
<dbReference type="PDB" id="3KCK">
    <property type="method" value="X-ray"/>
    <property type="resolution" value="2.20 A"/>
    <property type="chains" value="A=842-1132"/>
</dbReference>
<dbReference type="PDB" id="3KRR">
    <property type="method" value="X-ray"/>
    <property type="resolution" value="1.80 A"/>
    <property type="chains" value="A=840-1132"/>
</dbReference>
<dbReference type="PDB" id="3LPB">
    <property type="method" value="X-ray"/>
    <property type="resolution" value="2.00 A"/>
    <property type="chains" value="A/B=840-1132"/>
</dbReference>
<dbReference type="PDB" id="3Q32">
    <property type="method" value="X-ray"/>
    <property type="resolution" value="2.50 A"/>
    <property type="chains" value="A/B=839-1132"/>
</dbReference>
<dbReference type="PDB" id="3RVG">
    <property type="method" value="X-ray"/>
    <property type="resolution" value="2.50 A"/>
    <property type="chains" value="A=835-1132"/>
</dbReference>
<dbReference type="PDB" id="3TJC">
    <property type="method" value="X-ray"/>
    <property type="resolution" value="2.40 A"/>
    <property type="chains" value="A/B=837-1132"/>
</dbReference>
<dbReference type="PDB" id="3TJD">
    <property type="method" value="X-ray"/>
    <property type="resolution" value="2.90 A"/>
    <property type="chains" value="A/B=837-1132"/>
</dbReference>
<dbReference type="PDB" id="3UGC">
    <property type="method" value="X-ray"/>
    <property type="resolution" value="1.34 A"/>
    <property type="chains" value="A=840-1132"/>
</dbReference>
<dbReference type="PDB" id="3ZMM">
    <property type="method" value="X-ray"/>
    <property type="resolution" value="2.51 A"/>
    <property type="chains" value="A/B=835-1132"/>
</dbReference>
<dbReference type="PDB" id="4AQC">
    <property type="method" value="X-ray"/>
    <property type="resolution" value="1.90 A"/>
    <property type="chains" value="A/B=835-1132"/>
</dbReference>
<dbReference type="PDB" id="4BBE">
    <property type="method" value="X-ray"/>
    <property type="resolution" value="1.90 A"/>
    <property type="chains" value="A/B/C/D=839-1132"/>
</dbReference>
<dbReference type="PDB" id="4BBF">
    <property type="method" value="X-ray"/>
    <property type="resolution" value="2.00 A"/>
    <property type="chains" value="A/B/C/D=839-1132"/>
</dbReference>
<dbReference type="PDB" id="4C61">
    <property type="method" value="X-ray"/>
    <property type="resolution" value="2.45 A"/>
    <property type="chains" value="A/B=835-1132"/>
</dbReference>
<dbReference type="PDB" id="4C62">
    <property type="method" value="X-ray"/>
    <property type="resolution" value="2.75 A"/>
    <property type="chains" value="A/B=835-1132"/>
</dbReference>
<dbReference type="PDB" id="4D0W">
    <property type="method" value="X-ray"/>
    <property type="resolution" value="1.77 A"/>
    <property type="chains" value="A=835-1132"/>
</dbReference>
<dbReference type="PDB" id="4D0X">
    <property type="method" value="X-ray"/>
    <property type="resolution" value="1.82 A"/>
    <property type="chains" value="A=835-1132"/>
</dbReference>
<dbReference type="PDB" id="4D1S">
    <property type="method" value="X-ray"/>
    <property type="resolution" value="1.66 A"/>
    <property type="chains" value="A=835-1132"/>
</dbReference>
<dbReference type="PDB" id="4E4M">
    <property type="method" value="X-ray"/>
    <property type="resolution" value="2.25 A"/>
    <property type="chains" value="A/B/D/E=833-1132"/>
</dbReference>
<dbReference type="PDB" id="4E6D">
    <property type="method" value="X-ray"/>
    <property type="resolution" value="2.22 A"/>
    <property type="chains" value="A/B=835-1132"/>
</dbReference>
<dbReference type="PDB" id="4E6Q">
    <property type="method" value="X-ray"/>
    <property type="resolution" value="1.95 A"/>
    <property type="chains" value="A/B=835-1132"/>
</dbReference>
<dbReference type="PDB" id="4F08">
    <property type="method" value="X-ray"/>
    <property type="resolution" value="2.82 A"/>
    <property type="chains" value="A/B=833-1132"/>
</dbReference>
<dbReference type="PDB" id="4F09">
    <property type="method" value="X-ray"/>
    <property type="resolution" value="2.40 A"/>
    <property type="chains" value="A=833-1132"/>
</dbReference>
<dbReference type="PDB" id="4FVP">
    <property type="method" value="X-ray"/>
    <property type="resolution" value="2.01 A"/>
    <property type="chains" value="A=536-812"/>
</dbReference>
<dbReference type="PDB" id="4FVQ">
    <property type="method" value="X-ray"/>
    <property type="resolution" value="1.75 A"/>
    <property type="chains" value="A=536-812"/>
</dbReference>
<dbReference type="PDB" id="4FVR">
    <property type="method" value="X-ray"/>
    <property type="resolution" value="2.00 A"/>
    <property type="chains" value="A=536-812"/>
</dbReference>
<dbReference type="PDB" id="4GFM">
    <property type="method" value="X-ray"/>
    <property type="resolution" value="2.30 A"/>
    <property type="chains" value="A=833-1132"/>
</dbReference>
<dbReference type="PDB" id="4GMY">
    <property type="method" value="X-ray"/>
    <property type="resolution" value="2.40 A"/>
    <property type="chains" value="A=833-1132"/>
</dbReference>
<dbReference type="PDB" id="4HGE">
    <property type="method" value="X-ray"/>
    <property type="resolution" value="2.30 A"/>
    <property type="chains" value="A/B=833-1132"/>
</dbReference>
<dbReference type="PDB" id="4IVA">
    <property type="method" value="X-ray"/>
    <property type="resolution" value="1.50 A"/>
    <property type="chains" value="A=833-1132"/>
</dbReference>
<dbReference type="PDB" id="4JI9">
    <property type="method" value="X-ray"/>
    <property type="resolution" value="2.40 A"/>
    <property type="chains" value="A/B=833-1132"/>
</dbReference>
<dbReference type="PDB" id="4JIA">
    <property type="method" value="X-ray"/>
    <property type="resolution" value="1.85 A"/>
    <property type="chains" value="A=833-1132"/>
</dbReference>
<dbReference type="PDB" id="4P7E">
    <property type="method" value="X-ray"/>
    <property type="resolution" value="2.40 A"/>
    <property type="chains" value="A/B=840-1132"/>
</dbReference>
<dbReference type="PDB" id="4YTC">
    <property type="method" value="X-ray"/>
    <property type="resolution" value="2.16 A"/>
    <property type="chains" value="A=842-1132"/>
</dbReference>
<dbReference type="PDB" id="4YTF">
    <property type="method" value="X-ray"/>
    <property type="resolution" value="1.78 A"/>
    <property type="chains" value="A=842-1132"/>
</dbReference>
<dbReference type="PDB" id="4YTH">
    <property type="method" value="X-ray"/>
    <property type="resolution" value="2.04 A"/>
    <property type="chains" value="A=842-1132"/>
</dbReference>
<dbReference type="PDB" id="4YTI">
    <property type="method" value="X-ray"/>
    <property type="resolution" value="2.52 A"/>
    <property type="chains" value="A=842-1132"/>
</dbReference>
<dbReference type="PDB" id="4Z32">
    <property type="method" value="X-ray"/>
    <property type="resolution" value="3.04 A"/>
    <property type="chains" value="A/B/C/D/E/F/G/H=31-516"/>
</dbReference>
<dbReference type="PDB" id="4ZIM">
    <property type="method" value="X-ray"/>
    <property type="resolution" value="2.65 A"/>
    <property type="chains" value="A/B=839-1132"/>
</dbReference>
<dbReference type="PDB" id="5AEP">
    <property type="method" value="X-ray"/>
    <property type="resolution" value="1.95 A"/>
    <property type="chains" value="A=835-1132"/>
</dbReference>
<dbReference type="PDB" id="5CF4">
    <property type="method" value="X-ray"/>
    <property type="resolution" value="2.38 A"/>
    <property type="chains" value="A/B=839-1132"/>
</dbReference>
<dbReference type="PDB" id="5CF5">
    <property type="method" value="X-ray"/>
    <property type="resolution" value="2.45 A"/>
    <property type="chains" value="A/B=839-1132"/>
</dbReference>
<dbReference type="PDB" id="5CF6">
    <property type="method" value="X-ray"/>
    <property type="resolution" value="2.50 A"/>
    <property type="chains" value="A/B=839-1132"/>
</dbReference>
<dbReference type="PDB" id="5CF8">
    <property type="method" value="X-ray"/>
    <property type="resolution" value="1.80 A"/>
    <property type="chains" value="A/B=839-1132"/>
</dbReference>
<dbReference type="PDB" id="5HEZ">
    <property type="method" value="X-ray"/>
    <property type="resolution" value="2.66 A"/>
    <property type="chains" value="A/B/C/D=833-1132"/>
</dbReference>
<dbReference type="PDB" id="5I4N">
    <property type="method" value="X-ray"/>
    <property type="resolution" value="1.54 A"/>
    <property type="chains" value="A=535-812"/>
</dbReference>
<dbReference type="PDB" id="5L3A">
    <property type="method" value="X-ray"/>
    <property type="resolution" value="1.98 A"/>
    <property type="chains" value="A=840-1132"/>
</dbReference>
<dbReference type="PDB" id="5TQ3">
    <property type="method" value="X-ray"/>
    <property type="resolution" value="2.69 A"/>
    <property type="chains" value="A/B=837-1132"/>
</dbReference>
<dbReference type="PDB" id="5TQ4">
    <property type="method" value="X-ray"/>
    <property type="resolution" value="2.30 A"/>
    <property type="chains" value="A=837-1132"/>
</dbReference>
<dbReference type="PDB" id="5TQ5">
    <property type="method" value="X-ray"/>
    <property type="resolution" value="2.30 A"/>
    <property type="chains" value="A=837-1132"/>
</dbReference>
<dbReference type="PDB" id="5TQ6">
    <property type="method" value="X-ray"/>
    <property type="resolution" value="2.06 A"/>
    <property type="chains" value="A/B=837-1132"/>
</dbReference>
<dbReference type="PDB" id="5TQ7">
    <property type="method" value="X-ray"/>
    <property type="resolution" value="2.10 A"/>
    <property type="chains" value="A/B=837-1132"/>
</dbReference>
<dbReference type="PDB" id="5TQ8">
    <property type="method" value="X-ray"/>
    <property type="resolution" value="1.59 A"/>
    <property type="chains" value="A=837-1132"/>
</dbReference>
<dbReference type="PDB" id="5USY">
    <property type="method" value="X-ray"/>
    <property type="resolution" value="2.00 A"/>
    <property type="chains" value="A/B=840-1132"/>
</dbReference>
<dbReference type="PDB" id="5USZ">
    <property type="method" value="X-ray"/>
    <property type="resolution" value="2.10 A"/>
    <property type="chains" value="A=536-812"/>
</dbReference>
<dbReference type="PDB" id="5UT0">
    <property type="method" value="X-ray"/>
    <property type="resolution" value="2.10 A"/>
    <property type="chains" value="A=536-812"/>
</dbReference>
<dbReference type="PDB" id="5UT1">
    <property type="method" value="X-ray"/>
    <property type="resolution" value="1.95 A"/>
    <property type="chains" value="A=536-812"/>
</dbReference>
<dbReference type="PDB" id="5UT2">
    <property type="method" value="X-ray"/>
    <property type="resolution" value="1.75 A"/>
    <property type="chains" value="A=536-812"/>
</dbReference>
<dbReference type="PDB" id="5UT3">
    <property type="method" value="X-ray"/>
    <property type="resolution" value="1.50 A"/>
    <property type="chains" value="A=536-812"/>
</dbReference>
<dbReference type="PDB" id="5UT4">
    <property type="method" value="X-ray"/>
    <property type="resolution" value="2.00 A"/>
    <property type="chains" value="A=536-812"/>
</dbReference>
<dbReference type="PDB" id="5UT5">
    <property type="method" value="X-ray"/>
    <property type="resolution" value="1.90 A"/>
    <property type="chains" value="A=536-812"/>
</dbReference>
<dbReference type="PDB" id="5UT6">
    <property type="method" value="X-ray"/>
    <property type="resolution" value="1.65 A"/>
    <property type="chains" value="A=536-812"/>
</dbReference>
<dbReference type="PDB" id="5WEV">
    <property type="method" value="X-ray"/>
    <property type="resolution" value="1.85 A"/>
    <property type="chains" value="A=833-1132"/>
</dbReference>
<dbReference type="PDB" id="5WIJ">
    <property type="method" value="X-ray"/>
    <property type="resolution" value="2.04 A"/>
    <property type="chains" value="A=536-812"/>
</dbReference>
<dbReference type="PDB" id="5WIK">
    <property type="method" value="X-ray"/>
    <property type="resolution" value="2.60 A"/>
    <property type="chains" value="B=536-812"/>
</dbReference>
<dbReference type="PDB" id="5WIL">
    <property type="method" value="X-ray"/>
    <property type="resolution" value="2.20 A"/>
    <property type="chains" value="A=536-812"/>
</dbReference>
<dbReference type="PDB" id="5WIM">
    <property type="method" value="X-ray"/>
    <property type="resolution" value="2.55 A"/>
    <property type="chains" value="A=536-812"/>
</dbReference>
<dbReference type="PDB" id="5WIN">
    <property type="method" value="X-ray"/>
    <property type="resolution" value="2.38 A"/>
    <property type="chains" value="A=536-812"/>
</dbReference>
<dbReference type="PDB" id="6AAJ">
    <property type="method" value="X-ray"/>
    <property type="resolution" value="2.37 A"/>
    <property type="chains" value="A/B=834-1132"/>
</dbReference>
<dbReference type="PDB" id="6BBV">
    <property type="method" value="X-ray"/>
    <property type="resolution" value="1.80 A"/>
    <property type="chains" value="A=837-1132"/>
</dbReference>
<dbReference type="PDB" id="6BRW">
    <property type="method" value="X-ray"/>
    <property type="resolution" value="2.03 A"/>
    <property type="chains" value="A=536-812"/>
</dbReference>
<dbReference type="PDB" id="6BS0">
    <property type="method" value="X-ray"/>
    <property type="resolution" value="1.54 A"/>
    <property type="chains" value="A=536-812"/>
</dbReference>
<dbReference type="PDB" id="6BSS">
    <property type="method" value="X-ray"/>
    <property type="resolution" value="2.10 A"/>
    <property type="chains" value="A=536-812"/>
</dbReference>
<dbReference type="PDB" id="6D2I">
    <property type="method" value="X-ray"/>
    <property type="resolution" value="3.19 A"/>
    <property type="chains" value="A/B=536-808"/>
</dbReference>
<dbReference type="PDB" id="6DRW">
    <property type="method" value="X-ray"/>
    <property type="resolution" value="2.30 A"/>
    <property type="chains" value="A=840-1132"/>
</dbReference>
<dbReference type="PDB" id="6E2P">
    <property type="method" value="X-ray"/>
    <property type="resolution" value="2.83 A"/>
    <property type="chains" value="A/B=36-514"/>
</dbReference>
<dbReference type="PDB" id="6E2Q">
    <property type="method" value="X-ray"/>
    <property type="resolution" value="2.65 A"/>
    <property type="chains" value="A/B/C/D=36-514"/>
</dbReference>
<dbReference type="PDB" id="6G3C">
    <property type="method" value="X-ray"/>
    <property type="resolution" value="1.60 A"/>
    <property type="chains" value="A/B=537-808"/>
</dbReference>
<dbReference type="PDB" id="6M9H">
    <property type="method" value="X-ray"/>
    <property type="resolution" value="1.79 A"/>
    <property type="chains" value="A=536-812"/>
</dbReference>
<dbReference type="PDB" id="6OAV">
    <property type="method" value="X-ray"/>
    <property type="resolution" value="1.94 A"/>
    <property type="chains" value="A=536-812"/>
</dbReference>
<dbReference type="PDB" id="6OBB">
    <property type="method" value="X-ray"/>
    <property type="resolution" value="1.90 A"/>
    <property type="chains" value="A=536-812"/>
</dbReference>
<dbReference type="PDB" id="6OBF">
    <property type="method" value="X-ray"/>
    <property type="resolution" value="1.71 A"/>
    <property type="chains" value="A=536-812"/>
</dbReference>
<dbReference type="PDB" id="6OBL">
    <property type="method" value="X-ray"/>
    <property type="resolution" value="2.06 A"/>
    <property type="chains" value="A=536-812"/>
</dbReference>
<dbReference type="PDB" id="6OCC">
    <property type="method" value="X-ray"/>
    <property type="resolution" value="2.03 A"/>
    <property type="chains" value="A=536-812"/>
</dbReference>
<dbReference type="PDB" id="6TPD">
    <property type="method" value="X-ray"/>
    <property type="resolution" value="1.99 A"/>
    <property type="chains" value="A=842-1130"/>
</dbReference>
<dbReference type="PDB" id="6VGL">
    <property type="method" value="X-ray"/>
    <property type="resolution" value="1.90 A"/>
    <property type="chains" value="A/B/C/D=840-1132"/>
</dbReference>
<dbReference type="PDB" id="6VN8">
    <property type="method" value="X-ray"/>
    <property type="resolution" value="1.90 A"/>
    <property type="chains" value="A/B=840-1132"/>
</dbReference>
<dbReference type="PDB" id="6VNB">
    <property type="method" value="X-ray"/>
    <property type="resolution" value="2.19 A"/>
    <property type="chains" value="A/B=840-1132"/>
</dbReference>
<dbReference type="PDB" id="6VNC">
    <property type="method" value="X-ray"/>
    <property type="resolution" value="2.30 A"/>
    <property type="chains" value="A/B=840-1132"/>
</dbReference>
<dbReference type="PDB" id="6VNE">
    <property type="method" value="X-ray"/>
    <property type="resolution" value="2.32 A"/>
    <property type="chains" value="A/B=840-1132"/>
</dbReference>
<dbReference type="PDB" id="6VNF">
    <property type="method" value="X-ray"/>
    <property type="resolution" value="2.06 A"/>
    <property type="chains" value="A/B=840-1132"/>
</dbReference>
<dbReference type="PDB" id="6VNG">
    <property type="method" value="X-ray"/>
    <property type="resolution" value="2.50 A"/>
    <property type="chains" value="A/B=840-1132"/>
</dbReference>
<dbReference type="PDB" id="6VNH">
    <property type="method" value="X-ray"/>
    <property type="resolution" value="2.40 A"/>
    <property type="chains" value="A/B=840-1132"/>
</dbReference>
<dbReference type="PDB" id="6VNI">
    <property type="method" value="X-ray"/>
    <property type="resolution" value="2.10 A"/>
    <property type="chains" value="A/B=840-1132"/>
</dbReference>
<dbReference type="PDB" id="6VNJ">
    <property type="method" value="X-ray"/>
    <property type="resolution" value="1.90 A"/>
    <property type="chains" value="A/B=840-1132"/>
</dbReference>
<dbReference type="PDB" id="6VNK">
    <property type="method" value="X-ray"/>
    <property type="resolution" value="2.00 A"/>
    <property type="chains" value="A/B/C/D=840-1132"/>
</dbReference>
<dbReference type="PDB" id="6VNL">
    <property type="method" value="X-ray"/>
    <property type="resolution" value="2.40 A"/>
    <property type="chains" value="A/B/C/D=840-1132"/>
</dbReference>
<dbReference type="PDB" id="6VNM">
    <property type="method" value="X-ray"/>
    <property type="resolution" value="2.20 A"/>
    <property type="chains" value="A/B=840-1132"/>
</dbReference>
<dbReference type="PDB" id="6VS3">
    <property type="method" value="X-ray"/>
    <property type="resolution" value="2.00 A"/>
    <property type="chains" value="A/B=840-1132"/>
</dbReference>
<dbReference type="PDB" id="6VSN">
    <property type="method" value="X-ray"/>
    <property type="resolution" value="2.50 A"/>
    <property type="chains" value="A/B/C/D=840-1132"/>
</dbReference>
<dbReference type="PDB" id="6WTN">
    <property type="method" value="X-ray"/>
    <property type="resolution" value="1.83 A"/>
    <property type="chains" value="A=835-1132"/>
</dbReference>
<dbReference type="PDB" id="6WTO">
    <property type="method" value="X-ray"/>
    <property type="resolution" value="1.74 A"/>
    <property type="chains" value="A=835-1132"/>
</dbReference>
<dbReference type="PDB" id="6WTP">
    <property type="method" value="X-ray"/>
    <property type="resolution" value="2.50 A"/>
    <property type="chains" value="A=835-1132"/>
</dbReference>
<dbReference type="PDB" id="6WTQ">
    <property type="method" value="X-ray"/>
    <property type="resolution" value="1.80 A"/>
    <property type="chains" value="A=835-1132"/>
</dbReference>
<dbReference type="PDB" id="6X8E">
    <property type="method" value="X-ray"/>
    <property type="resolution" value="1.75 A"/>
    <property type="chains" value="A/B=837-1132"/>
</dbReference>
<dbReference type="PDB" id="6XJK">
    <property type="method" value="X-ray"/>
    <property type="resolution" value="2.02 A"/>
    <property type="chains" value="A=536-812"/>
</dbReference>
<dbReference type="PDB" id="7F7W">
    <property type="method" value="X-ray"/>
    <property type="resolution" value="1.83 A"/>
    <property type="chains" value="A/B=536-810"/>
</dbReference>
<dbReference type="PDB" id="7JYO">
    <property type="method" value="X-ray"/>
    <property type="resolution" value="2.16 A"/>
    <property type="chains" value="A=536-812"/>
</dbReference>
<dbReference type="PDB" id="7JYQ">
    <property type="method" value="X-ray"/>
    <property type="resolution" value="1.86 A"/>
    <property type="chains" value="A=536-812"/>
</dbReference>
<dbReference type="PDB" id="7LL4">
    <property type="method" value="X-ray"/>
    <property type="resolution" value="1.31 A"/>
    <property type="chains" value="A=839-1132"/>
</dbReference>
<dbReference type="PDB" id="7LL5">
    <property type="method" value="X-ray"/>
    <property type="resolution" value="1.50 A"/>
    <property type="chains" value="A=840-1132"/>
</dbReference>
<dbReference type="PDB" id="7Q7I">
    <property type="method" value="X-ray"/>
    <property type="resolution" value="1.78 A"/>
    <property type="chains" value="A=839-1132"/>
</dbReference>
<dbReference type="PDB" id="7Q7K">
    <property type="method" value="X-ray"/>
    <property type="resolution" value="1.61 A"/>
    <property type="chains" value="A=839-1132"/>
</dbReference>
<dbReference type="PDB" id="7Q7L">
    <property type="method" value="X-ray"/>
    <property type="resolution" value="1.97 A"/>
    <property type="chains" value="A=839-1132"/>
</dbReference>
<dbReference type="PDB" id="7Q7W">
    <property type="method" value="X-ray"/>
    <property type="resolution" value="1.85 A"/>
    <property type="chains" value="A=839-1132"/>
</dbReference>
<dbReference type="PDB" id="7REE">
    <property type="method" value="X-ray"/>
    <property type="resolution" value="1.38 A"/>
    <property type="chains" value="A=839-1132"/>
</dbReference>
<dbReference type="PDB" id="7RN6">
    <property type="method" value="X-ray"/>
    <property type="resolution" value="1.50 A"/>
    <property type="chains" value="A=839-1132"/>
</dbReference>
<dbReference type="PDB" id="7SZW">
    <property type="method" value="X-ray"/>
    <property type="resolution" value="1.91 A"/>
    <property type="chains" value="A=536-812"/>
</dbReference>
<dbReference type="PDB" id="7T0P">
    <property type="method" value="X-ray"/>
    <property type="resolution" value="2.04 A"/>
    <property type="chains" value="A/B=536-812"/>
</dbReference>
<dbReference type="PDB" id="7T1T">
    <property type="method" value="X-ray"/>
    <property type="resolution" value="2.08 A"/>
    <property type="chains" value="A=536-812"/>
</dbReference>
<dbReference type="PDB" id="7TEU">
    <property type="method" value="X-ray"/>
    <property type="resolution" value="1.45 A"/>
    <property type="chains" value="A=837-1132"/>
</dbReference>
<dbReference type="PDB" id="7UYW">
    <property type="method" value="X-ray"/>
    <property type="resolution" value="2.51 A"/>
    <property type="chains" value="A=842-1132"/>
</dbReference>
<dbReference type="PDB" id="8B8N">
    <property type="method" value="X-ray"/>
    <property type="resolution" value="2.00 A"/>
    <property type="chains" value="A=536-812"/>
</dbReference>
<dbReference type="PDB" id="8B8U">
    <property type="method" value="X-ray"/>
    <property type="resolution" value="1.50 A"/>
    <property type="chains" value="A/B=536-812"/>
</dbReference>
<dbReference type="PDB" id="8B99">
    <property type="method" value="X-ray"/>
    <property type="resolution" value="1.60 A"/>
    <property type="chains" value="A=536-812"/>
</dbReference>
<dbReference type="PDB" id="8B9E">
    <property type="method" value="X-ray"/>
    <property type="resolution" value="1.50 A"/>
    <property type="chains" value="A=536-812"/>
</dbReference>
<dbReference type="PDB" id="8B9H">
    <property type="method" value="X-ray"/>
    <property type="resolution" value="1.50 A"/>
    <property type="chains" value="A=536-812"/>
</dbReference>
<dbReference type="PDB" id="8BA2">
    <property type="method" value="X-ray"/>
    <property type="resolution" value="1.50 A"/>
    <property type="chains" value="A=536-812"/>
</dbReference>
<dbReference type="PDB" id="8BA3">
    <property type="method" value="X-ray"/>
    <property type="resolution" value="1.40 A"/>
    <property type="chains" value="A=536-812"/>
</dbReference>
<dbReference type="PDB" id="8BA4">
    <property type="method" value="X-ray"/>
    <property type="resolution" value="2.10 A"/>
    <property type="chains" value="A/B=536-812"/>
</dbReference>
<dbReference type="PDB" id="8BAB">
    <property type="method" value="X-ray"/>
    <property type="resolution" value="1.55 A"/>
    <property type="chains" value="A=536-812"/>
</dbReference>
<dbReference type="PDB" id="8BAK">
    <property type="method" value="X-ray"/>
    <property type="resolution" value="1.65 A"/>
    <property type="chains" value="A=536-812"/>
</dbReference>
<dbReference type="PDB" id="8BM2">
    <property type="method" value="X-ray"/>
    <property type="resolution" value="1.50 A"/>
    <property type="chains" value="A/B=840-1132"/>
</dbReference>
<dbReference type="PDB" id="8BPV">
    <property type="method" value="X-ray"/>
    <property type="resolution" value="1.70 A"/>
    <property type="chains" value="A=840-1132"/>
</dbReference>
<dbReference type="PDB" id="8BPW">
    <property type="method" value="X-ray"/>
    <property type="resolution" value="1.80 A"/>
    <property type="chains" value="A/B=840-1132"/>
</dbReference>
<dbReference type="PDB" id="8BX6">
    <property type="method" value="X-ray"/>
    <property type="resolution" value="1.50 A"/>
    <property type="chains" value="A=840-1132"/>
</dbReference>
<dbReference type="PDB" id="8BX9">
    <property type="method" value="X-ray"/>
    <property type="resolution" value="1.40 A"/>
    <property type="chains" value="A/B=840-1132"/>
</dbReference>
<dbReference type="PDB" id="8BXC">
    <property type="method" value="X-ray"/>
    <property type="resolution" value="1.90 A"/>
    <property type="chains" value="A/B=840-1132"/>
</dbReference>
<dbReference type="PDB" id="8BXH">
    <property type="method" value="X-ray"/>
    <property type="resolution" value="1.30 A"/>
    <property type="chains" value="A=840-1132"/>
</dbReference>
<dbReference type="PDB" id="8C08">
    <property type="method" value="X-ray"/>
    <property type="resolution" value="2.20 A"/>
    <property type="chains" value="A/B=536-812"/>
</dbReference>
<dbReference type="PDB" id="8C09">
    <property type="method" value="X-ray"/>
    <property type="resolution" value="1.90 A"/>
    <property type="chains" value="A=536-812"/>
</dbReference>
<dbReference type="PDB" id="8C0A">
    <property type="method" value="X-ray"/>
    <property type="resolution" value="1.70 A"/>
    <property type="chains" value="A/B=536-812"/>
</dbReference>
<dbReference type="PDB" id="8CZ9">
    <property type="method" value="X-ray"/>
    <property type="resolution" value="1.65 A"/>
    <property type="chains" value="C=811-818"/>
</dbReference>
<dbReference type="PDB" id="8EX0">
    <property type="method" value="X-ray"/>
    <property type="resolution" value="1.85 A"/>
    <property type="chains" value="A=536-812"/>
</dbReference>
<dbReference type="PDB" id="8EX1">
    <property type="method" value="X-ray"/>
    <property type="resolution" value="1.50 A"/>
    <property type="chains" value="A=536-812"/>
</dbReference>
<dbReference type="PDB" id="8EX2">
    <property type="method" value="X-ray"/>
    <property type="resolution" value="1.90 A"/>
    <property type="chains" value="A=536-812"/>
</dbReference>
<dbReference type="PDB" id="8EXK">
    <property type="method" value="X-ray"/>
    <property type="resolution" value="2.10 A"/>
    <property type="chains" value="B=1000-1015"/>
</dbReference>
<dbReference type="PDB" id="8EYA">
    <property type="method" value="X-ray"/>
    <property type="resolution" value="2.10 A"/>
    <property type="chains" value="D/E=1000-1015"/>
</dbReference>
<dbReference type="PDB" id="8EYB">
    <property type="method" value="X-ray"/>
    <property type="resolution" value="2.35 A"/>
    <property type="chains" value="D/E=1000-1015"/>
</dbReference>
<dbReference type="PDB" id="8F88">
    <property type="method" value="X-ray"/>
    <property type="resolution" value="3.10 A"/>
    <property type="chains" value="E/F/G=1000-1015"/>
</dbReference>
<dbReference type="PDB" id="8G6Z">
    <property type="method" value="X-ray"/>
    <property type="resolution" value="2.45 A"/>
    <property type="chains" value="A/B=837-1132"/>
</dbReference>
<dbReference type="PDB" id="8G8O">
    <property type="method" value="X-ray"/>
    <property type="resolution" value="2.20 A"/>
    <property type="chains" value="A/B=837-1132"/>
</dbReference>
<dbReference type="PDB" id="8G8X">
    <property type="method" value="X-ray"/>
    <property type="resolution" value="1.97 A"/>
    <property type="chains" value="A/B=837-1132"/>
</dbReference>
<dbReference type="PDBsum" id="2B7A"/>
<dbReference type="PDBsum" id="2W1I"/>
<dbReference type="PDBsum" id="2XA4"/>
<dbReference type="PDBsum" id="3E62"/>
<dbReference type="PDBsum" id="3E63"/>
<dbReference type="PDBsum" id="3E64"/>
<dbReference type="PDBsum" id="3FUP"/>
<dbReference type="PDBsum" id="3IO7"/>
<dbReference type="PDBsum" id="3IOK"/>
<dbReference type="PDBsum" id="3JY9"/>
<dbReference type="PDBsum" id="3KCK"/>
<dbReference type="PDBsum" id="3KRR"/>
<dbReference type="PDBsum" id="3LPB"/>
<dbReference type="PDBsum" id="3Q32"/>
<dbReference type="PDBsum" id="3RVG"/>
<dbReference type="PDBsum" id="3TJC"/>
<dbReference type="PDBsum" id="3TJD"/>
<dbReference type="PDBsum" id="3UGC"/>
<dbReference type="PDBsum" id="3ZMM"/>
<dbReference type="PDBsum" id="4AQC"/>
<dbReference type="PDBsum" id="4BBE"/>
<dbReference type="PDBsum" id="4BBF"/>
<dbReference type="PDBsum" id="4C61"/>
<dbReference type="PDBsum" id="4C62"/>
<dbReference type="PDBsum" id="4D0W"/>
<dbReference type="PDBsum" id="4D0X"/>
<dbReference type="PDBsum" id="4D1S"/>
<dbReference type="PDBsum" id="4E4M"/>
<dbReference type="PDBsum" id="4E6D"/>
<dbReference type="PDBsum" id="4E6Q"/>
<dbReference type="PDBsum" id="4F08"/>
<dbReference type="PDBsum" id="4F09"/>
<dbReference type="PDBsum" id="4FVP"/>
<dbReference type="PDBsum" id="4FVQ"/>
<dbReference type="PDBsum" id="4FVR"/>
<dbReference type="PDBsum" id="4GFM"/>
<dbReference type="PDBsum" id="4GMY"/>
<dbReference type="PDBsum" id="4HGE"/>
<dbReference type="PDBsum" id="4IVA"/>
<dbReference type="PDBsum" id="4JI9"/>
<dbReference type="PDBsum" id="4JIA"/>
<dbReference type="PDBsum" id="4P7E"/>
<dbReference type="PDBsum" id="4YTC"/>
<dbReference type="PDBsum" id="4YTF"/>
<dbReference type="PDBsum" id="4YTH"/>
<dbReference type="PDBsum" id="4YTI"/>
<dbReference type="PDBsum" id="4Z32"/>
<dbReference type="PDBsum" id="4ZIM"/>
<dbReference type="PDBsum" id="5AEP"/>
<dbReference type="PDBsum" id="5CF4"/>
<dbReference type="PDBsum" id="5CF5"/>
<dbReference type="PDBsum" id="5CF6"/>
<dbReference type="PDBsum" id="5CF8"/>
<dbReference type="PDBsum" id="5HEZ"/>
<dbReference type="PDBsum" id="5I4N"/>
<dbReference type="PDBsum" id="5L3A"/>
<dbReference type="PDBsum" id="5TQ3"/>
<dbReference type="PDBsum" id="5TQ4"/>
<dbReference type="PDBsum" id="5TQ5"/>
<dbReference type="PDBsum" id="5TQ6"/>
<dbReference type="PDBsum" id="5TQ7"/>
<dbReference type="PDBsum" id="5TQ8"/>
<dbReference type="PDBsum" id="5USY"/>
<dbReference type="PDBsum" id="5USZ"/>
<dbReference type="PDBsum" id="5UT0"/>
<dbReference type="PDBsum" id="5UT1"/>
<dbReference type="PDBsum" id="5UT2"/>
<dbReference type="PDBsum" id="5UT3"/>
<dbReference type="PDBsum" id="5UT4"/>
<dbReference type="PDBsum" id="5UT5"/>
<dbReference type="PDBsum" id="5UT6"/>
<dbReference type="PDBsum" id="5WEV"/>
<dbReference type="PDBsum" id="5WIJ"/>
<dbReference type="PDBsum" id="5WIK"/>
<dbReference type="PDBsum" id="5WIL"/>
<dbReference type="PDBsum" id="5WIM"/>
<dbReference type="PDBsum" id="5WIN"/>
<dbReference type="PDBsum" id="6AAJ"/>
<dbReference type="PDBsum" id="6BBV"/>
<dbReference type="PDBsum" id="6BRW"/>
<dbReference type="PDBsum" id="6BS0"/>
<dbReference type="PDBsum" id="6BSS"/>
<dbReference type="PDBsum" id="6D2I"/>
<dbReference type="PDBsum" id="6DRW"/>
<dbReference type="PDBsum" id="6E2P"/>
<dbReference type="PDBsum" id="6E2Q"/>
<dbReference type="PDBsum" id="6G3C"/>
<dbReference type="PDBsum" id="6M9H"/>
<dbReference type="PDBsum" id="6OAV"/>
<dbReference type="PDBsum" id="6OBB"/>
<dbReference type="PDBsum" id="6OBF"/>
<dbReference type="PDBsum" id="6OBL"/>
<dbReference type="PDBsum" id="6OCC"/>
<dbReference type="PDBsum" id="6TPD"/>
<dbReference type="PDBsum" id="6VGL"/>
<dbReference type="PDBsum" id="6VN8"/>
<dbReference type="PDBsum" id="6VNB"/>
<dbReference type="PDBsum" id="6VNC"/>
<dbReference type="PDBsum" id="6VNE"/>
<dbReference type="PDBsum" id="6VNF"/>
<dbReference type="PDBsum" id="6VNG"/>
<dbReference type="PDBsum" id="6VNH"/>
<dbReference type="PDBsum" id="6VNI"/>
<dbReference type="PDBsum" id="6VNJ"/>
<dbReference type="PDBsum" id="6VNK"/>
<dbReference type="PDBsum" id="6VNL"/>
<dbReference type="PDBsum" id="6VNM"/>
<dbReference type="PDBsum" id="6VS3"/>
<dbReference type="PDBsum" id="6VSN"/>
<dbReference type="PDBsum" id="6WTN"/>
<dbReference type="PDBsum" id="6WTO"/>
<dbReference type="PDBsum" id="6WTP"/>
<dbReference type="PDBsum" id="6WTQ"/>
<dbReference type="PDBsum" id="6X8E"/>
<dbReference type="PDBsum" id="6XJK"/>
<dbReference type="PDBsum" id="7F7W"/>
<dbReference type="PDBsum" id="7JYO"/>
<dbReference type="PDBsum" id="7JYQ"/>
<dbReference type="PDBsum" id="7LL4"/>
<dbReference type="PDBsum" id="7LL5"/>
<dbReference type="PDBsum" id="7Q7I"/>
<dbReference type="PDBsum" id="7Q7K"/>
<dbReference type="PDBsum" id="7Q7L"/>
<dbReference type="PDBsum" id="7Q7W"/>
<dbReference type="PDBsum" id="7REE"/>
<dbReference type="PDBsum" id="7RN6"/>
<dbReference type="PDBsum" id="7SZW"/>
<dbReference type="PDBsum" id="7T0P"/>
<dbReference type="PDBsum" id="7T1T"/>
<dbReference type="PDBsum" id="7TEU"/>
<dbReference type="PDBsum" id="7UYW"/>
<dbReference type="PDBsum" id="8B8N"/>
<dbReference type="PDBsum" id="8B8U"/>
<dbReference type="PDBsum" id="8B99"/>
<dbReference type="PDBsum" id="8B9E"/>
<dbReference type="PDBsum" id="8B9H"/>
<dbReference type="PDBsum" id="8BA2"/>
<dbReference type="PDBsum" id="8BA3"/>
<dbReference type="PDBsum" id="8BA4"/>
<dbReference type="PDBsum" id="8BAB"/>
<dbReference type="PDBsum" id="8BAK"/>
<dbReference type="PDBsum" id="8BM2"/>
<dbReference type="PDBsum" id="8BPV"/>
<dbReference type="PDBsum" id="8BPW"/>
<dbReference type="PDBsum" id="8BX6"/>
<dbReference type="PDBsum" id="8BX9"/>
<dbReference type="PDBsum" id="8BXC"/>
<dbReference type="PDBsum" id="8BXH"/>
<dbReference type="PDBsum" id="8C08"/>
<dbReference type="PDBsum" id="8C09"/>
<dbReference type="PDBsum" id="8C0A"/>
<dbReference type="PDBsum" id="8CZ9"/>
<dbReference type="PDBsum" id="8EX0"/>
<dbReference type="PDBsum" id="8EX1"/>
<dbReference type="PDBsum" id="8EX2"/>
<dbReference type="PDBsum" id="8EXK"/>
<dbReference type="PDBsum" id="8EYA"/>
<dbReference type="PDBsum" id="8EYB"/>
<dbReference type="PDBsum" id="8F88"/>
<dbReference type="PDBsum" id="8G6Z"/>
<dbReference type="PDBsum" id="8G8O"/>
<dbReference type="PDBsum" id="8G8X"/>
<dbReference type="SMR" id="O60674"/>
<dbReference type="BioGRID" id="109920">
    <property type="interactions" value="158"/>
</dbReference>
<dbReference type="ComplexPortal" id="CPX-506">
    <property type="entry name" value="Interleukin-5 receptor-ligand complex"/>
</dbReference>
<dbReference type="ComplexPortal" id="CPX-512">
    <property type="entry name" value="Granulocyte-macrophage colony-stimulating factor-receptor complex"/>
</dbReference>
<dbReference type="CORUM" id="O60674"/>
<dbReference type="DIP" id="DIP-33880N"/>
<dbReference type="FunCoup" id="O60674">
    <property type="interactions" value="2183"/>
</dbReference>
<dbReference type="IntAct" id="O60674">
    <property type="interactions" value="57"/>
</dbReference>
<dbReference type="MINT" id="O60674"/>
<dbReference type="STRING" id="9606.ENSP00000371067"/>
<dbReference type="BindingDB" id="O60674"/>
<dbReference type="ChEMBL" id="CHEMBL2971"/>
<dbReference type="DrugBank" id="DB04716">
    <property type="generic name" value="2-tert-butyl-9-fluoro-1,6-dihydrobenzo[h]imidazo[4,5-f]isoquinolin-7-one"/>
</dbReference>
<dbReference type="DrugBank" id="DB07162">
    <property type="generic name" value="4-(3-amino-1H-indazol-5-yl)-N-tert-butylbenzenesulfonamide"/>
</dbReference>
<dbReference type="DrugBank" id="DB08067">
    <property type="generic name" value="4-[(2-{4-[(CYCLOPROPYLCARBAMOYL)AMINO]-1H-PYRAZOL-3-YL}-1H-BENZIMIDAZOL-6-YL)METHYL]MORPHOLIN-4-IUM"/>
</dbReference>
<dbReference type="DrugBank" id="DB07161">
    <property type="generic name" value="5-phenyl-1H-indazol-3-amine"/>
</dbReference>
<dbReference type="DrugBank" id="DB14973">
    <property type="generic name" value="Abrocitinib"/>
</dbReference>
<dbReference type="DrugBank" id="DB12535">
    <property type="generic name" value="AC-430"/>
</dbReference>
<dbReference type="DrugBank" id="DB12588">
    <property type="generic name" value="AZD-1480"/>
</dbReference>
<dbReference type="DrugBank" id="DB11817">
    <property type="generic name" value="Baricitinib"/>
</dbReference>
<dbReference type="DrugBank" id="DB12591">
    <property type="generic name" value="BMS-911543"/>
</dbReference>
<dbReference type="DrugBank" id="DB15499">
    <property type="generic name" value="Cerdulatinib"/>
</dbReference>
<dbReference type="DrugBank" id="DB16133">
    <property type="generic name" value="Delgocitinib"/>
</dbReference>
<dbReference type="DrugBank" id="DB18847">
    <property type="generic name" value="Deuruxolitinib"/>
</dbReference>
<dbReference type="DrugBank" id="DB11986">
    <property type="generic name" value="Entrectinib"/>
</dbReference>
<dbReference type="DrugBank" id="DB12500">
    <property type="generic name" value="Fedratinib"/>
</dbReference>
<dbReference type="DrugBank" id="DB12010">
    <property type="generic name" value="Fostamatinib"/>
</dbReference>
<dbReference type="DrugBank" id="DB13040">
    <property type="generic name" value="Gandotinib"/>
</dbReference>
<dbReference type="DrugBank" id="DB12645">
    <property type="generic name" value="Givinostat"/>
</dbReference>
<dbReference type="DrugBank" id="DB12784">
    <property type="generic name" value="Ilginatinib"/>
</dbReference>
<dbReference type="DrugBank" id="DB12154">
    <property type="generic name" value="Itacitinib"/>
</dbReference>
<dbReference type="DrugBank" id="DB11763">
    <property type="generic name" value="Momelotinib"/>
</dbReference>
<dbReference type="DrugBank" id="DB11697">
    <property type="generic name" value="Pacritinib"/>
</dbReference>
<dbReference type="DrugBank" id="DB15822">
    <property type="generic name" value="Pralsetinib"/>
</dbReference>
<dbReference type="DrugBank" id="DB08877">
    <property type="generic name" value="Ruxolitinib"/>
</dbReference>
<dbReference type="DrugBank" id="DB15294">
    <property type="generic name" value="SB-1578"/>
</dbReference>
<dbReference type="DrugBank" id="DB13245">
    <property type="generic name" value="Thiram"/>
</dbReference>
<dbReference type="DrugBank" id="DB08895">
    <property type="generic name" value="Tofacitinib"/>
</dbReference>
<dbReference type="DrugBank" id="DB05243">
    <property type="generic name" value="XL019"/>
</dbReference>
<dbReference type="DrugBank" id="DB15035">
    <property type="generic name" value="Zanubrutinib"/>
</dbReference>
<dbReference type="DrugCentral" id="O60674"/>
<dbReference type="GuidetoPHARMACOLOGY" id="2048"/>
<dbReference type="GlyGen" id="O60674">
    <property type="glycosylation" value="3 sites, 1 O-linked glycan (1 site)"/>
</dbReference>
<dbReference type="iPTMnet" id="O60674"/>
<dbReference type="PhosphoSitePlus" id="O60674"/>
<dbReference type="BioMuta" id="JAK2"/>
<dbReference type="CPTAC" id="CPTAC-1252"/>
<dbReference type="CPTAC" id="CPTAC-3095"/>
<dbReference type="CPTAC" id="CPTAC-3096"/>
<dbReference type="jPOST" id="O60674"/>
<dbReference type="MassIVE" id="O60674"/>
<dbReference type="PaxDb" id="9606-ENSP00000371067"/>
<dbReference type="PeptideAtlas" id="O60674"/>
<dbReference type="ProteomicsDB" id="49519"/>
<dbReference type="Pumba" id="O60674"/>
<dbReference type="Antibodypedia" id="24086">
    <property type="antibodies" value="1260 antibodies from 46 providers"/>
</dbReference>
<dbReference type="CPTC" id="O60674">
    <property type="antibodies" value="1 antibody"/>
</dbReference>
<dbReference type="DNASU" id="3717"/>
<dbReference type="Ensembl" id="ENST00000381652.4">
    <property type="protein sequence ID" value="ENSP00000371067.4"/>
    <property type="gene ID" value="ENSG00000096968.14"/>
</dbReference>
<dbReference type="GeneID" id="3717"/>
<dbReference type="KEGG" id="hsa:3717"/>
<dbReference type="MANE-Select" id="ENST00000381652.4">
    <property type="protein sequence ID" value="ENSP00000371067.4"/>
    <property type="RefSeq nucleotide sequence ID" value="NM_004972.4"/>
    <property type="RefSeq protein sequence ID" value="NP_004963.1"/>
</dbReference>
<dbReference type="UCSC" id="uc003ziw.3">
    <property type="organism name" value="human"/>
</dbReference>
<dbReference type="AGR" id="HGNC:6192"/>
<dbReference type="CTD" id="3717"/>
<dbReference type="DisGeNET" id="3717"/>
<dbReference type="GeneCards" id="JAK2"/>
<dbReference type="HGNC" id="HGNC:6192">
    <property type="gene designation" value="JAK2"/>
</dbReference>
<dbReference type="HPA" id="ENSG00000096968">
    <property type="expression patterns" value="Low tissue specificity"/>
</dbReference>
<dbReference type="MalaCards" id="JAK2"/>
<dbReference type="MIM" id="147796">
    <property type="type" value="gene"/>
</dbReference>
<dbReference type="MIM" id="254450">
    <property type="type" value="phenotype"/>
</dbReference>
<dbReference type="MIM" id="263300">
    <property type="type" value="phenotype"/>
</dbReference>
<dbReference type="MIM" id="600880">
    <property type="type" value="phenotype"/>
</dbReference>
<dbReference type="MIM" id="601626">
    <property type="type" value="phenotype"/>
</dbReference>
<dbReference type="MIM" id="614521">
    <property type="type" value="phenotype"/>
</dbReference>
<dbReference type="neXtProt" id="NX_O60674"/>
<dbReference type="OpenTargets" id="ENSG00000096968"/>
<dbReference type="Orphanet" id="667662">
    <property type="disease" value="Breast implant-associated anaplastic large cell lymphoma"/>
</dbReference>
<dbReference type="Orphanet" id="131">
    <property type="disease" value="Budd-Chiari syndrome"/>
</dbReference>
<dbReference type="Orphanet" id="3318">
    <property type="disease" value="Essential thrombocythemia"/>
</dbReference>
<dbReference type="Orphanet" id="71493">
    <property type="disease" value="Familial thrombocytosis"/>
</dbReference>
<dbReference type="Orphanet" id="729">
    <property type="disease" value="Polycythemia vera"/>
</dbReference>
<dbReference type="Orphanet" id="824">
    <property type="disease" value="Primary myelofibrosis"/>
</dbReference>
<dbReference type="PharmGKB" id="PA29989"/>
<dbReference type="VEuPathDB" id="HostDB:ENSG00000096968"/>
<dbReference type="eggNOG" id="KOG0197">
    <property type="taxonomic scope" value="Eukaryota"/>
</dbReference>
<dbReference type="GeneTree" id="ENSGT00940000155640"/>
<dbReference type="HOGENOM" id="CLU_008155_1_0_1"/>
<dbReference type="InParanoid" id="O60674"/>
<dbReference type="OMA" id="RCHNILV"/>
<dbReference type="OrthoDB" id="1915767at2759"/>
<dbReference type="PAN-GO" id="O60674">
    <property type="GO annotations" value="10 GO annotations based on evolutionary models"/>
</dbReference>
<dbReference type="PhylomeDB" id="O60674"/>
<dbReference type="TreeFam" id="TF327041"/>
<dbReference type="BRENDA" id="2.7.10.2">
    <property type="organism ID" value="2681"/>
</dbReference>
<dbReference type="PathwayCommons" id="O60674"/>
<dbReference type="Reactome" id="R-HSA-1059683">
    <property type="pathway name" value="Interleukin-6 signaling"/>
</dbReference>
<dbReference type="Reactome" id="R-HSA-110056">
    <property type="pathway name" value="MAPK3 (ERK1) activation"/>
</dbReference>
<dbReference type="Reactome" id="R-HSA-112411">
    <property type="pathway name" value="MAPK1 (ERK2) activation"/>
</dbReference>
<dbReference type="Reactome" id="R-HSA-1170546">
    <property type="pathway name" value="Prolactin receptor signaling"/>
</dbReference>
<dbReference type="Reactome" id="R-HSA-1433557">
    <property type="pathway name" value="Signaling by SCF-KIT"/>
</dbReference>
<dbReference type="Reactome" id="R-HSA-2586552">
    <property type="pathway name" value="Signaling by Leptin"/>
</dbReference>
<dbReference type="Reactome" id="R-HSA-3214858">
    <property type="pathway name" value="RMTs methylate histone arginines"/>
</dbReference>
<dbReference type="Reactome" id="R-HSA-512988">
    <property type="pathway name" value="Interleukin-3, Interleukin-5 and GM-CSF signaling"/>
</dbReference>
<dbReference type="Reactome" id="R-HSA-5673000">
    <property type="pathway name" value="RAF activation"/>
</dbReference>
<dbReference type="Reactome" id="R-HSA-5673001">
    <property type="pathway name" value="RAF/MAP kinase cascade"/>
</dbReference>
<dbReference type="Reactome" id="R-HSA-6785807">
    <property type="pathway name" value="Interleukin-4 and Interleukin-13 signaling"/>
</dbReference>
<dbReference type="Reactome" id="R-HSA-6788467">
    <property type="pathway name" value="IL-6-type cytokine receptor ligand interactions"/>
</dbReference>
<dbReference type="Reactome" id="R-HSA-6802946">
    <property type="pathway name" value="Signaling by moderate kinase activity BRAF mutants"/>
</dbReference>
<dbReference type="Reactome" id="R-HSA-6802952">
    <property type="pathway name" value="Signaling by BRAF and RAF1 fusions"/>
</dbReference>
<dbReference type="Reactome" id="R-HSA-6802955">
    <property type="pathway name" value="Paradoxical activation of RAF signaling by kinase inactive BRAF"/>
</dbReference>
<dbReference type="Reactome" id="R-HSA-69231">
    <property type="pathway name" value="Cyclin D associated events in G1"/>
</dbReference>
<dbReference type="Reactome" id="R-HSA-877300">
    <property type="pathway name" value="Interferon gamma signaling"/>
</dbReference>
<dbReference type="Reactome" id="R-HSA-877312">
    <property type="pathway name" value="Regulation of IFNG signaling"/>
</dbReference>
<dbReference type="Reactome" id="R-HSA-8854691">
    <property type="pathway name" value="Interleukin-20 family signaling"/>
</dbReference>
<dbReference type="Reactome" id="R-HSA-8984722">
    <property type="pathway name" value="Interleukin-35 Signalling"/>
</dbReference>
<dbReference type="Reactome" id="R-HSA-9006335">
    <property type="pathway name" value="Signaling by Erythropoietin"/>
</dbReference>
<dbReference type="Reactome" id="R-HSA-9020591">
    <property type="pathway name" value="Interleukin-12 signaling"/>
</dbReference>
<dbReference type="Reactome" id="R-HSA-9020933">
    <property type="pathway name" value="Interleukin-23 signaling"/>
</dbReference>
<dbReference type="Reactome" id="R-HSA-9020956">
    <property type="pathway name" value="Interleukin-27 signaling"/>
</dbReference>
<dbReference type="Reactome" id="R-HSA-9027276">
    <property type="pathway name" value="Erythropoietin activates Phosphoinositide-3-kinase (PI3K)"/>
</dbReference>
<dbReference type="Reactome" id="R-HSA-9027277">
    <property type="pathway name" value="Erythropoietin activates Phospholipase C gamma (PLCG)"/>
</dbReference>
<dbReference type="Reactome" id="R-HSA-9027283">
    <property type="pathway name" value="Erythropoietin activates STAT5"/>
</dbReference>
<dbReference type="Reactome" id="R-HSA-9027284">
    <property type="pathway name" value="Erythropoietin activates RAS"/>
</dbReference>
<dbReference type="Reactome" id="R-HSA-912526">
    <property type="pathway name" value="Interleukin receptor SHC signaling"/>
</dbReference>
<dbReference type="Reactome" id="R-HSA-9649948">
    <property type="pathway name" value="Signaling downstream of RAS mutants"/>
</dbReference>
<dbReference type="Reactome" id="R-HSA-9656223">
    <property type="pathway name" value="Signaling by RAF1 mutants"/>
</dbReference>
<dbReference type="Reactome" id="R-HSA-9670439">
    <property type="pathway name" value="Signaling by phosphorylated juxtamembrane, extracellular and kinase domain KIT mutants"/>
</dbReference>
<dbReference type="Reactome" id="R-HSA-9674555">
    <property type="pathway name" value="Signaling by CSF3 (G-CSF)"/>
</dbReference>
<dbReference type="Reactome" id="R-HSA-9679191">
    <property type="pathway name" value="Potential therapeutics for SARS"/>
</dbReference>
<dbReference type="Reactome" id="R-HSA-9705462">
    <property type="pathway name" value="Inactivation of CSF3 (G-CSF) signaling"/>
</dbReference>
<dbReference type="Reactome" id="R-HSA-9732724">
    <property type="pathway name" value="IFNG signaling activates MAPKs"/>
</dbReference>
<dbReference type="Reactome" id="R-HSA-982772">
    <property type="pathway name" value="Growth hormone receptor signaling"/>
</dbReference>
<dbReference type="Reactome" id="R-HSA-983231">
    <property type="pathway name" value="Factors involved in megakaryocyte development and platelet production"/>
</dbReference>
<dbReference type="SignaLink" id="O60674"/>
<dbReference type="SIGNOR" id="O60674"/>
<dbReference type="BioGRID-ORCS" id="3717">
    <property type="hits" value="30 hits in 1210 CRISPR screens"/>
</dbReference>
<dbReference type="ChiTaRS" id="JAK2">
    <property type="organism name" value="human"/>
</dbReference>
<dbReference type="EvolutionaryTrace" id="O60674"/>
<dbReference type="GeneWiki" id="Janus_kinase_2"/>
<dbReference type="GenomeRNAi" id="3717"/>
<dbReference type="Pharos" id="O60674">
    <property type="development level" value="Tclin"/>
</dbReference>
<dbReference type="PRO" id="PR:O60674"/>
<dbReference type="Proteomes" id="UP000005640">
    <property type="component" value="Chromosome 9"/>
</dbReference>
<dbReference type="RNAct" id="O60674">
    <property type="molecule type" value="protein"/>
</dbReference>
<dbReference type="Bgee" id="ENSG00000096968">
    <property type="expression patterns" value="Expressed in calcaneal tendon and 184 other cell types or tissues"/>
</dbReference>
<dbReference type="ExpressionAtlas" id="O60674">
    <property type="expression patterns" value="baseline and differential"/>
</dbReference>
<dbReference type="GO" id="GO:0005901">
    <property type="term" value="C:caveola"/>
    <property type="evidence" value="ECO:0000250"/>
    <property type="project" value="BHF-UCL"/>
</dbReference>
<dbReference type="GO" id="GO:0005737">
    <property type="term" value="C:cytoplasm"/>
    <property type="evidence" value="ECO:0000314"/>
    <property type="project" value="BHF-UCL"/>
</dbReference>
<dbReference type="GO" id="GO:0009898">
    <property type="term" value="C:cytoplasmic side of plasma membrane"/>
    <property type="evidence" value="ECO:0000314"/>
    <property type="project" value="UniProt"/>
</dbReference>
<dbReference type="GO" id="GO:0005856">
    <property type="term" value="C:cytoskeleton"/>
    <property type="evidence" value="ECO:0007669"/>
    <property type="project" value="InterPro"/>
</dbReference>
<dbReference type="GO" id="GO:0005829">
    <property type="term" value="C:cytosol"/>
    <property type="evidence" value="ECO:0000318"/>
    <property type="project" value="GO_Central"/>
</dbReference>
<dbReference type="GO" id="GO:0031904">
    <property type="term" value="C:endosome lumen"/>
    <property type="evidence" value="ECO:0000304"/>
    <property type="project" value="Reactome"/>
</dbReference>
<dbReference type="GO" id="GO:0000791">
    <property type="term" value="C:euchromatin"/>
    <property type="evidence" value="ECO:0007669"/>
    <property type="project" value="Ensembl"/>
</dbReference>
<dbReference type="GO" id="GO:0031234">
    <property type="term" value="C:extrinsic component of cytoplasmic side of plasma membrane"/>
    <property type="evidence" value="ECO:0000314"/>
    <property type="project" value="UniProt"/>
</dbReference>
<dbReference type="GO" id="GO:0019897">
    <property type="term" value="C:extrinsic component of plasma membrane"/>
    <property type="evidence" value="ECO:0000314"/>
    <property type="project" value="UniProt"/>
</dbReference>
<dbReference type="GO" id="GO:0005925">
    <property type="term" value="C:focal adhesion"/>
    <property type="evidence" value="ECO:0000314"/>
    <property type="project" value="HPA"/>
</dbReference>
<dbReference type="GO" id="GO:0098978">
    <property type="term" value="C:glutamatergic synapse"/>
    <property type="evidence" value="ECO:0007669"/>
    <property type="project" value="Ensembl"/>
</dbReference>
<dbReference type="GO" id="GO:0030526">
    <property type="term" value="C:granulocyte macrophage colony-stimulating factor receptor complex"/>
    <property type="evidence" value="ECO:0000314"/>
    <property type="project" value="ComplexPortal"/>
</dbReference>
<dbReference type="GO" id="GO:0042022">
    <property type="term" value="C:interleukin-12 receptor complex"/>
    <property type="evidence" value="ECO:0000353"/>
    <property type="project" value="ComplexPortal"/>
</dbReference>
<dbReference type="GO" id="GO:0072536">
    <property type="term" value="C:interleukin-23 receptor complex"/>
    <property type="evidence" value="ECO:0000353"/>
    <property type="project" value="ComplexPortal"/>
</dbReference>
<dbReference type="GO" id="GO:0045121">
    <property type="term" value="C:membrane raft"/>
    <property type="evidence" value="ECO:0000250"/>
    <property type="project" value="BHF-UCL"/>
</dbReference>
<dbReference type="GO" id="GO:0005654">
    <property type="term" value="C:nucleoplasm"/>
    <property type="evidence" value="ECO:0000314"/>
    <property type="project" value="HPA"/>
</dbReference>
<dbReference type="GO" id="GO:0005634">
    <property type="term" value="C:nucleus"/>
    <property type="evidence" value="ECO:0000314"/>
    <property type="project" value="UniProtKB"/>
</dbReference>
<dbReference type="GO" id="GO:0005886">
    <property type="term" value="C:plasma membrane"/>
    <property type="evidence" value="ECO:0000314"/>
    <property type="project" value="HPA"/>
</dbReference>
<dbReference type="GO" id="GO:0098794">
    <property type="term" value="C:postsynapse"/>
    <property type="evidence" value="ECO:0007669"/>
    <property type="project" value="Ensembl"/>
</dbReference>
<dbReference type="GO" id="GO:0033130">
    <property type="term" value="F:acetylcholine receptor binding"/>
    <property type="evidence" value="ECO:0007669"/>
    <property type="project" value="Ensembl"/>
</dbReference>
<dbReference type="GO" id="GO:0005524">
    <property type="term" value="F:ATP binding"/>
    <property type="evidence" value="ECO:0007669"/>
    <property type="project" value="UniProtKB-KW"/>
</dbReference>
<dbReference type="GO" id="GO:0005131">
    <property type="term" value="F:growth hormone receptor binding"/>
    <property type="evidence" value="ECO:0000250"/>
    <property type="project" value="BHF-UCL"/>
</dbReference>
<dbReference type="GO" id="GO:0020037">
    <property type="term" value="F:heme binding"/>
    <property type="evidence" value="ECO:0000314"/>
    <property type="project" value="UniProtKB"/>
</dbReference>
<dbReference type="GO" id="GO:0042393">
    <property type="term" value="F:histone binding"/>
    <property type="evidence" value="ECO:0007669"/>
    <property type="project" value="InterPro"/>
</dbReference>
<dbReference type="GO" id="GO:0035401">
    <property type="term" value="F:histone H3Y41 kinase activity"/>
    <property type="evidence" value="ECO:0000314"/>
    <property type="project" value="UniProtKB"/>
</dbReference>
<dbReference type="GO" id="GO:0042802">
    <property type="term" value="F:identical protein binding"/>
    <property type="evidence" value="ECO:0000353"/>
    <property type="project" value="IntAct"/>
</dbReference>
<dbReference type="GO" id="GO:0043560">
    <property type="term" value="F:insulin receptor substrate binding"/>
    <property type="evidence" value="ECO:0007669"/>
    <property type="project" value="Ensembl"/>
</dbReference>
<dbReference type="GO" id="GO:0005143">
    <property type="term" value="F:interleukin-12 receptor binding"/>
    <property type="evidence" value="ECO:0000250"/>
    <property type="project" value="BHF-UCL"/>
</dbReference>
<dbReference type="GO" id="GO:0046872">
    <property type="term" value="F:metal ion binding"/>
    <property type="evidence" value="ECO:0007669"/>
    <property type="project" value="UniProtKB-KW"/>
</dbReference>
<dbReference type="GO" id="GO:0004715">
    <property type="term" value="F:non-membrane spanning protein tyrosine kinase activity"/>
    <property type="evidence" value="ECO:0000314"/>
    <property type="project" value="UniProt"/>
</dbReference>
<dbReference type="GO" id="GO:0051428">
    <property type="term" value="F:peptide hormone receptor binding"/>
    <property type="evidence" value="ECO:0007669"/>
    <property type="project" value="Ensembl"/>
</dbReference>
<dbReference type="GO" id="GO:0043548">
    <property type="term" value="F:phosphatidylinositol 3-kinase binding"/>
    <property type="evidence" value="ECO:0007669"/>
    <property type="project" value="Ensembl"/>
</dbReference>
<dbReference type="GO" id="GO:0004672">
    <property type="term" value="F:protein kinase activity"/>
    <property type="evidence" value="ECO:0000303"/>
    <property type="project" value="ProtInc"/>
</dbReference>
<dbReference type="GO" id="GO:0019901">
    <property type="term" value="F:protein kinase binding"/>
    <property type="evidence" value="ECO:0000314"/>
    <property type="project" value="BHF-UCL"/>
</dbReference>
<dbReference type="GO" id="GO:0004713">
    <property type="term" value="F:protein tyrosine kinase activity"/>
    <property type="evidence" value="ECO:0000314"/>
    <property type="project" value="UniProtKB"/>
</dbReference>
<dbReference type="GO" id="GO:0042169">
    <property type="term" value="F:SH2 domain binding"/>
    <property type="evidence" value="ECO:0000353"/>
    <property type="project" value="UniProtKB"/>
</dbReference>
<dbReference type="GO" id="GO:0030546">
    <property type="term" value="F:signaling receptor activator activity"/>
    <property type="evidence" value="ECO:0000250"/>
    <property type="project" value="ARUK-UCL"/>
</dbReference>
<dbReference type="GO" id="GO:0005102">
    <property type="term" value="F:signaling receptor binding"/>
    <property type="evidence" value="ECO:0000353"/>
    <property type="project" value="UniProtKB"/>
</dbReference>
<dbReference type="GO" id="GO:0031702">
    <property type="term" value="F:type 1 angiotensin receptor binding"/>
    <property type="evidence" value="ECO:0007669"/>
    <property type="project" value="Ensembl"/>
</dbReference>
<dbReference type="GO" id="GO:0030041">
    <property type="term" value="P:actin filament polymerization"/>
    <property type="evidence" value="ECO:0000303"/>
    <property type="project" value="BHF-UCL"/>
</dbReference>
<dbReference type="GO" id="GO:0042976">
    <property type="term" value="P:activation of Janus kinase activity"/>
    <property type="evidence" value="ECO:0000250"/>
    <property type="project" value="UniProtKB"/>
</dbReference>
<dbReference type="GO" id="GO:0002250">
    <property type="term" value="P:adaptive immune response"/>
    <property type="evidence" value="ECO:0007669"/>
    <property type="project" value="UniProtKB-KW"/>
</dbReference>
<dbReference type="GO" id="GO:0006915">
    <property type="term" value="P:apoptotic process"/>
    <property type="evidence" value="ECO:0000250"/>
    <property type="project" value="BHF-UCL"/>
</dbReference>
<dbReference type="GO" id="GO:0031103">
    <property type="term" value="P:axon regeneration"/>
    <property type="evidence" value="ECO:0007669"/>
    <property type="project" value="Ensembl"/>
</dbReference>
<dbReference type="GO" id="GO:0007155">
    <property type="term" value="P:cell adhesion"/>
    <property type="evidence" value="ECO:0000314"/>
    <property type="project" value="UniProt"/>
</dbReference>
<dbReference type="GO" id="GO:0030154">
    <property type="term" value="P:cell differentiation"/>
    <property type="evidence" value="ECO:0000250"/>
    <property type="project" value="BHF-UCL"/>
</dbReference>
<dbReference type="GO" id="GO:0007259">
    <property type="term" value="P:cell surface receptor signaling pathway via JAK-STAT"/>
    <property type="evidence" value="ECO:0000314"/>
    <property type="project" value="ARUK-UCL"/>
</dbReference>
<dbReference type="GO" id="GO:0071549">
    <property type="term" value="P:cellular response to dexamethasone stimulus"/>
    <property type="evidence" value="ECO:0007669"/>
    <property type="project" value="Ensembl"/>
</dbReference>
<dbReference type="GO" id="GO:0036016">
    <property type="term" value="P:cellular response to interleukin-3"/>
    <property type="evidence" value="ECO:0007669"/>
    <property type="project" value="Ensembl"/>
</dbReference>
<dbReference type="GO" id="GO:0098586">
    <property type="term" value="P:cellular response to virus"/>
    <property type="evidence" value="ECO:0000303"/>
    <property type="project" value="ComplexPortal"/>
</dbReference>
<dbReference type="GO" id="GO:0038065">
    <property type="term" value="P:collagen-activated signaling pathway"/>
    <property type="evidence" value="ECO:0000315"/>
    <property type="project" value="ARUK-UCL"/>
</dbReference>
<dbReference type="GO" id="GO:0019221">
    <property type="term" value="P:cytokine-mediated signaling pathway"/>
    <property type="evidence" value="ECO:0000314"/>
    <property type="project" value="BHF-UCL"/>
</dbReference>
<dbReference type="GO" id="GO:0007167">
    <property type="term" value="P:enzyme-linked receptor protein signaling pathway"/>
    <property type="evidence" value="ECO:0000250"/>
    <property type="project" value="BHF-UCL"/>
</dbReference>
<dbReference type="GO" id="GO:0030218">
    <property type="term" value="P:erythrocyte differentiation"/>
    <property type="evidence" value="ECO:0000250"/>
    <property type="project" value="UniProtKB"/>
</dbReference>
<dbReference type="GO" id="GO:0038162">
    <property type="term" value="P:erythropoietin-mediated signaling pathway"/>
    <property type="evidence" value="ECO:0000314"/>
    <property type="project" value="UniProt"/>
</dbReference>
<dbReference type="GO" id="GO:0097191">
    <property type="term" value="P:extrinsic apoptotic signaling pathway"/>
    <property type="evidence" value="ECO:0000250"/>
    <property type="project" value="BHF-UCL"/>
</dbReference>
<dbReference type="GO" id="GO:0038157">
    <property type="term" value="P:granulocyte-macrophage colony-stimulating factor signaling pathway"/>
    <property type="evidence" value="ECO:0000314"/>
    <property type="project" value="ComplexPortal"/>
</dbReference>
<dbReference type="GO" id="GO:0060396">
    <property type="term" value="P:growth hormone receptor signaling pathway"/>
    <property type="evidence" value="ECO:0000314"/>
    <property type="project" value="BHF-UCL"/>
</dbReference>
<dbReference type="GO" id="GO:0060397">
    <property type="term" value="P:growth hormone receptor signaling pathway via JAK-STAT"/>
    <property type="evidence" value="ECO:0000314"/>
    <property type="project" value="UniProtKB"/>
</dbReference>
<dbReference type="GO" id="GO:0006955">
    <property type="term" value="P:immune response"/>
    <property type="evidence" value="ECO:0000303"/>
    <property type="project" value="ComplexPortal"/>
</dbReference>
<dbReference type="GO" id="GO:0035722">
    <property type="term" value="P:interleukin-12-mediated signaling pathway"/>
    <property type="evidence" value="ECO:0000314"/>
    <property type="project" value="BHF-UCL"/>
</dbReference>
<dbReference type="GO" id="GO:0038155">
    <property type="term" value="P:interleukin-23-mediated signaling pathway"/>
    <property type="evidence" value="ECO:0000314"/>
    <property type="project" value="UniProt"/>
</dbReference>
<dbReference type="GO" id="GO:0038156">
    <property type="term" value="P:interleukin-3-mediated signaling pathway"/>
    <property type="evidence" value="ECO:0000314"/>
    <property type="project" value="UniProt"/>
</dbReference>
<dbReference type="GO" id="GO:0070757">
    <property type="term" value="P:interleukin-35-mediated signaling pathway"/>
    <property type="evidence" value="ECO:0000304"/>
    <property type="project" value="Reactome"/>
</dbReference>
<dbReference type="GO" id="GO:0038043">
    <property type="term" value="P:interleukin-5-mediated signaling pathway"/>
    <property type="evidence" value="ECO:0000314"/>
    <property type="project" value="UniProt"/>
</dbReference>
<dbReference type="GO" id="GO:0070102">
    <property type="term" value="P:interleukin-6-mediated signaling pathway"/>
    <property type="evidence" value="ECO:0000304"/>
    <property type="project" value="Reactome"/>
</dbReference>
<dbReference type="GO" id="GO:0035556">
    <property type="term" value="P:intracellular signal transduction"/>
    <property type="evidence" value="ECO:0000250"/>
    <property type="project" value="BHF-UCL"/>
</dbReference>
<dbReference type="GO" id="GO:0008631">
    <property type="term" value="P:intrinsic apoptotic signaling pathway in response to oxidative stress"/>
    <property type="evidence" value="ECO:0007669"/>
    <property type="project" value="Ensembl"/>
</dbReference>
<dbReference type="GO" id="GO:0031663">
    <property type="term" value="P:lipopolysaccharide-mediated signaling pathway"/>
    <property type="evidence" value="ECO:0000250"/>
    <property type="project" value="BHF-UCL"/>
</dbReference>
<dbReference type="GO" id="GO:0061180">
    <property type="term" value="P:mammary gland epithelium development"/>
    <property type="evidence" value="ECO:0000250"/>
    <property type="project" value="BHF-UCL"/>
</dbReference>
<dbReference type="GO" id="GO:0007498">
    <property type="term" value="P:mesoderm development"/>
    <property type="evidence" value="ECO:0000304"/>
    <property type="project" value="ProtInc"/>
</dbReference>
<dbReference type="GO" id="GO:0001774">
    <property type="term" value="P:microglial cell activation"/>
    <property type="evidence" value="ECO:0000250"/>
    <property type="project" value="ARUK-UCL"/>
</dbReference>
<dbReference type="GO" id="GO:0050804">
    <property type="term" value="P:modulation of chemical synaptic transmission"/>
    <property type="evidence" value="ECO:0007669"/>
    <property type="project" value="Ensembl"/>
</dbReference>
<dbReference type="GO" id="GO:0010667">
    <property type="term" value="P:negative regulation of cardiac muscle cell apoptotic process"/>
    <property type="evidence" value="ECO:0007669"/>
    <property type="project" value="Ensembl"/>
</dbReference>
<dbReference type="GO" id="GO:0008285">
    <property type="term" value="P:negative regulation of cell population proliferation"/>
    <property type="evidence" value="ECO:0000250"/>
    <property type="project" value="BHF-UCL"/>
</dbReference>
<dbReference type="GO" id="GO:0022408">
    <property type="term" value="P:negative regulation of cell-cell adhesion"/>
    <property type="evidence" value="ECO:0007669"/>
    <property type="project" value="Ensembl"/>
</dbReference>
<dbReference type="GO" id="GO:1900016">
    <property type="term" value="P:negative regulation of cytokine production involved in inflammatory response"/>
    <property type="evidence" value="ECO:0000250"/>
    <property type="project" value="UniProt"/>
</dbReference>
<dbReference type="GO" id="GO:0043524">
    <property type="term" value="P:negative regulation of neuron apoptotic process"/>
    <property type="evidence" value="ECO:0007669"/>
    <property type="project" value="Ensembl"/>
</dbReference>
<dbReference type="GO" id="GO:0031959">
    <property type="term" value="P:nuclear receptor-mediated mineralocorticoid signaling pathway"/>
    <property type="evidence" value="ECO:0007669"/>
    <property type="project" value="Ensembl"/>
</dbReference>
<dbReference type="GO" id="GO:0048008">
    <property type="term" value="P:platelet-derived growth factor receptor signaling pathway"/>
    <property type="evidence" value="ECO:0007669"/>
    <property type="project" value="Ensembl"/>
</dbReference>
<dbReference type="GO" id="GO:2001235">
    <property type="term" value="P:positive regulation of apoptotic signaling pathway"/>
    <property type="evidence" value="ECO:0007669"/>
    <property type="project" value="Ensembl"/>
</dbReference>
<dbReference type="GO" id="GO:0045597">
    <property type="term" value="P:positive regulation of cell differentiation"/>
    <property type="evidence" value="ECO:0007669"/>
    <property type="project" value="Ensembl"/>
</dbReference>
<dbReference type="GO" id="GO:0030335">
    <property type="term" value="P:positive regulation of cell migration"/>
    <property type="evidence" value="ECO:0007669"/>
    <property type="project" value="Ensembl"/>
</dbReference>
<dbReference type="GO" id="GO:0010811">
    <property type="term" value="P:positive regulation of cell-substrate adhesion"/>
    <property type="evidence" value="ECO:0000314"/>
    <property type="project" value="BHF-UCL"/>
</dbReference>
<dbReference type="GO" id="GO:0120162">
    <property type="term" value="P:positive regulation of cold-induced thermogenesis"/>
    <property type="evidence" value="ECO:0000250"/>
    <property type="project" value="YuBioLab"/>
</dbReference>
<dbReference type="GO" id="GO:0007204">
    <property type="term" value="P:positive regulation of cytosolic calcium ion concentration"/>
    <property type="evidence" value="ECO:0007669"/>
    <property type="project" value="Ensembl"/>
</dbReference>
<dbReference type="GO" id="GO:1904037">
    <property type="term" value="P:positive regulation of epithelial cell apoptotic process"/>
    <property type="evidence" value="ECO:0007669"/>
    <property type="project" value="Ensembl"/>
</dbReference>
<dbReference type="GO" id="GO:1902728">
    <property type="term" value="P:positive regulation of growth factor dependent skeletal muscle satellite cell proliferation"/>
    <property type="evidence" value="ECO:0007669"/>
    <property type="project" value="Ensembl"/>
</dbReference>
<dbReference type="GO" id="GO:0060399">
    <property type="term" value="P:positive regulation of growth hormone receptor signaling pathway"/>
    <property type="evidence" value="ECO:0000250"/>
    <property type="project" value="BHF-UCL"/>
</dbReference>
<dbReference type="GO" id="GO:0032024">
    <property type="term" value="P:positive regulation of insulin secretion"/>
    <property type="evidence" value="ECO:0007669"/>
    <property type="project" value="Ensembl"/>
</dbReference>
<dbReference type="GO" id="GO:0032731">
    <property type="term" value="P:positive regulation of interleukin-1 beta production"/>
    <property type="evidence" value="ECO:0000250"/>
    <property type="project" value="ARUK-UCL"/>
</dbReference>
<dbReference type="GO" id="GO:0032740">
    <property type="term" value="P:positive regulation of interleukin-17 production"/>
    <property type="evidence" value="ECO:0000303"/>
    <property type="project" value="ComplexPortal"/>
</dbReference>
<dbReference type="GO" id="GO:0070665">
    <property type="term" value="P:positive regulation of leukocyte proliferation"/>
    <property type="evidence" value="ECO:0000314"/>
    <property type="project" value="ComplexPortal"/>
</dbReference>
<dbReference type="GO" id="GO:0043410">
    <property type="term" value="P:positive regulation of MAPK cascade"/>
    <property type="evidence" value="ECO:0007669"/>
    <property type="project" value="Ensembl"/>
</dbReference>
<dbReference type="GO" id="GO:0045348">
    <property type="term" value="P:positive regulation of MHC class II biosynthetic process"/>
    <property type="evidence" value="ECO:0000250"/>
    <property type="project" value="ARUK-UCL"/>
</dbReference>
<dbReference type="GO" id="GO:0032819">
    <property type="term" value="P:positive regulation of natural killer cell proliferation"/>
    <property type="evidence" value="ECO:0000314"/>
    <property type="project" value="ComplexPortal"/>
</dbReference>
<dbReference type="GO" id="GO:0045429">
    <property type="term" value="P:positive regulation of nitric oxide biosynthetic process"/>
    <property type="evidence" value="ECO:0007669"/>
    <property type="project" value="Ensembl"/>
</dbReference>
<dbReference type="GO" id="GO:0051142">
    <property type="term" value="P:positive regulation of NK T cell proliferation"/>
    <property type="evidence" value="ECO:0000314"/>
    <property type="project" value="ComplexPortal"/>
</dbReference>
<dbReference type="GO" id="GO:0051897">
    <property type="term" value="P:positive regulation of phosphatidylinositol 3-kinase/protein kinase B signal transduction"/>
    <property type="evidence" value="ECO:0000250"/>
    <property type="project" value="BHF-UCL"/>
</dbReference>
<dbReference type="GO" id="GO:0010572">
    <property type="term" value="P:positive regulation of platelet activation"/>
    <property type="evidence" value="ECO:0000314"/>
    <property type="project" value="ARUK-UCL"/>
</dbReference>
<dbReference type="GO" id="GO:1901731">
    <property type="term" value="P:positive regulation of platelet aggregation"/>
    <property type="evidence" value="ECO:0000314"/>
    <property type="project" value="ARUK-UCL"/>
</dbReference>
<dbReference type="GO" id="GO:0042307">
    <property type="term" value="P:positive regulation of protein import into nucleus"/>
    <property type="evidence" value="ECO:0007669"/>
    <property type="project" value="Ensembl"/>
</dbReference>
<dbReference type="GO" id="GO:0046427">
    <property type="term" value="P:positive regulation of receptor signaling pathway via JAK-STAT"/>
    <property type="evidence" value="ECO:0000314"/>
    <property type="project" value="ComplexPortal"/>
</dbReference>
<dbReference type="GO" id="GO:0060391">
    <property type="term" value="P:positive regulation of SMAD protein signal transduction"/>
    <property type="evidence" value="ECO:0000316"/>
    <property type="project" value="MGI"/>
</dbReference>
<dbReference type="GO" id="GO:0042102">
    <property type="term" value="P:positive regulation of T cell proliferation"/>
    <property type="evidence" value="ECO:0000314"/>
    <property type="project" value="ComplexPortal"/>
</dbReference>
<dbReference type="GO" id="GO:2000318">
    <property type="term" value="P:positive regulation of T-helper 17 type immune response"/>
    <property type="evidence" value="ECO:0000303"/>
    <property type="project" value="ComplexPortal"/>
</dbReference>
<dbReference type="GO" id="GO:0045944">
    <property type="term" value="P:positive regulation of transcription by RNA polymerase II"/>
    <property type="evidence" value="ECO:0000250"/>
    <property type="project" value="ARUK-UCL"/>
</dbReference>
<dbReference type="GO" id="GO:0032760">
    <property type="term" value="P:positive regulation of tumor necrosis factor production"/>
    <property type="evidence" value="ECO:0000250"/>
    <property type="project" value="ARUK-UCL"/>
</dbReference>
<dbReference type="GO" id="GO:0032729">
    <property type="term" value="P:positive regulation of type II interferon production"/>
    <property type="evidence" value="ECO:0000314"/>
    <property type="project" value="ComplexPortal"/>
</dbReference>
<dbReference type="GO" id="GO:0042531">
    <property type="term" value="P:positive regulation of tyrosine phosphorylation of STAT protein"/>
    <property type="evidence" value="ECO:0000250"/>
    <property type="project" value="UniProtKB"/>
</dbReference>
<dbReference type="GO" id="GO:1904707">
    <property type="term" value="P:positive regulation of vascular associated smooth muscle cell proliferation"/>
    <property type="evidence" value="ECO:0007669"/>
    <property type="project" value="Ensembl"/>
</dbReference>
<dbReference type="GO" id="GO:0035166">
    <property type="term" value="P:post-embryonic hemopoiesis"/>
    <property type="evidence" value="ECO:0007669"/>
    <property type="project" value="Ensembl"/>
</dbReference>
<dbReference type="GO" id="GO:0043687">
    <property type="term" value="P:post-translational protein modification"/>
    <property type="evidence" value="ECO:0000314"/>
    <property type="project" value="UniProtKB"/>
</dbReference>
<dbReference type="GO" id="GO:0046777">
    <property type="term" value="P:protein autophosphorylation"/>
    <property type="evidence" value="ECO:0000250"/>
    <property type="project" value="UniProtKB"/>
</dbReference>
<dbReference type="GO" id="GO:0042981">
    <property type="term" value="P:regulation of apoptotic process"/>
    <property type="evidence" value="ECO:0000318"/>
    <property type="project" value="GO_Central"/>
</dbReference>
<dbReference type="GO" id="GO:0050727">
    <property type="term" value="P:regulation of inflammatory response"/>
    <property type="evidence" value="ECO:0000314"/>
    <property type="project" value="BHF-UCL"/>
</dbReference>
<dbReference type="GO" id="GO:0045428">
    <property type="term" value="P:regulation of nitric oxide biosynthetic process"/>
    <property type="evidence" value="ECO:0000250"/>
    <property type="project" value="ARUK-UCL"/>
</dbReference>
<dbReference type="GO" id="GO:1905539">
    <property type="term" value="P:regulation of postsynapse to nucleus signaling pathway"/>
    <property type="evidence" value="ECO:0007669"/>
    <property type="project" value="Ensembl"/>
</dbReference>
<dbReference type="GO" id="GO:0046425">
    <property type="term" value="P:regulation of receptor signaling pathway via JAK-STAT"/>
    <property type="evidence" value="ECO:0000250"/>
    <property type="project" value="BHF-UCL"/>
</dbReference>
<dbReference type="GO" id="GO:0014075">
    <property type="term" value="P:response to amine"/>
    <property type="evidence" value="ECO:0007669"/>
    <property type="project" value="Ensembl"/>
</dbReference>
<dbReference type="GO" id="GO:0046677">
    <property type="term" value="P:response to antibiotic"/>
    <property type="evidence" value="ECO:0000314"/>
    <property type="project" value="MGI"/>
</dbReference>
<dbReference type="GO" id="GO:0033194">
    <property type="term" value="P:response to hydroperoxide"/>
    <property type="evidence" value="ECO:0007669"/>
    <property type="project" value="Ensembl"/>
</dbReference>
<dbReference type="GO" id="GO:0070671">
    <property type="term" value="P:response to interleukin-12"/>
    <property type="evidence" value="ECO:0000314"/>
    <property type="project" value="BHF-UCL"/>
</dbReference>
<dbReference type="GO" id="GO:0034612">
    <property type="term" value="P:response to tumor necrosis factor"/>
    <property type="evidence" value="ECO:0000314"/>
    <property type="project" value="BHF-UCL"/>
</dbReference>
<dbReference type="GO" id="GO:0007165">
    <property type="term" value="P:signal transduction"/>
    <property type="evidence" value="ECO:0000250"/>
    <property type="project" value="UniProtKB"/>
</dbReference>
<dbReference type="GO" id="GO:0034050">
    <property type="term" value="P:symbiont-induced defense-related programmed cell death"/>
    <property type="evidence" value="ECO:0007669"/>
    <property type="project" value="Ensembl"/>
</dbReference>
<dbReference type="GO" id="GO:0038163">
    <property type="term" value="P:thrombopoietin-mediated signaling pathway"/>
    <property type="evidence" value="ECO:0000314"/>
    <property type="project" value="UniProt"/>
</dbReference>
<dbReference type="GO" id="GO:0006366">
    <property type="term" value="P:transcription by RNA polymerase II"/>
    <property type="evidence" value="ECO:0007669"/>
    <property type="project" value="Ensembl"/>
</dbReference>
<dbReference type="GO" id="GO:0033209">
    <property type="term" value="P:tumor necrosis factor-mediated signaling pathway"/>
    <property type="evidence" value="ECO:0000314"/>
    <property type="project" value="BHF-UCL"/>
</dbReference>
<dbReference type="GO" id="GO:0060333">
    <property type="term" value="P:type II interferon-mediated signaling pathway"/>
    <property type="evidence" value="ECO:0000304"/>
    <property type="project" value="Reactome"/>
</dbReference>
<dbReference type="CDD" id="cd14473">
    <property type="entry name" value="FERM_B-lobe"/>
    <property type="match status" value="1"/>
</dbReference>
<dbReference type="CDD" id="cd13333">
    <property type="entry name" value="FERM_C_JAK2"/>
    <property type="match status" value="1"/>
</dbReference>
<dbReference type="CDD" id="cd05078">
    <property type="entry name" value="PTK_Jak2_rpt1"/>
    <property type="match status" value="1"/>
</dbReference>
<dbReference type="CDD" id="cd14205">
    <property type="entry name" value="PTKc_Jak2_rpt2"/>
    <property type="match status" value="1"/>
</dbReference>
<dbReference type="CDD" id="cd10379">
    <property type="entry name" value="SH2_Jak2"/>
    <property type="match status" value="1"/>
</dbReference>
<dbReference type="FunFam" id="1.10.510.10:FF:000110">
    <property type="entry name" value="Tyrosine-protein kinase"/>
    <property type="match status" value="1"/>
</dbReference>
<dbReference type="FunFam" id="2.30.29.30:FF:000177">
    <property type="entry name" value="Tyrosine-protein kinase"/>
    <property type="match status" value="1"/>
</dbReference>
<dbReference type="FunFam" id="3.30.200.20:FF:000084">
    <property type="entry name" value="Tyrosine-protein kinase"/>
    <property type="match status" value="1"/>
</dbReference>
<dbReference type="FunFam" id="3.30.200.20:FF:000135">
    <property type="entry name" value="Tyrosine-protein kinase"/>
    <property type="match status" value="1"/>
</dbReference>
<dbReference type="FunFam" id="3.30.505.10:FF:000037">
    <property type="entry name" value="Tyrosine-protein kinase"/>
    <property type="match status" value="1"/>
</dbReference>
<dbReference type="FunFam" id="1.10.510.10:FF:000114">
    <property type="entry name" value="Tyrosine-protein kinase JAK2"/>
    <property type="match status" value="1"/>
</dbReference>
<dbReference type="Gene3D" id="3.30.200.20">
    <property type="entry name" value="Phosphorylase Kinase, domain 1"/>
    <property type="match status" value="2"/>
</dbReference>
<dbReference type="Gene3D" id="2.30.29.30">
    <property type="entry name" value="Pleckstrin-homology domain (PH domain)/Phosphotyrosine-binding domain (PTB)"/>
    <property type="match status" value="1"/>
</dbReference>
<dbReference type="Gene3D" id="3.30.505.10">
    <property type="entry name" value="SH2 domain"/>
    <property type="match status" value="1"/>
</dbReference>
<dbReference type="Gene3D" id="1.10.510.10">
    <property type="entry name" value="Transferase(Phosphotransferase) domain 1"/>
    <property type="match status" value="2"/>
</dbReference>
<dbReference type="InterPro" id="IPR019749">
    <property type="entry name" value="Band_41_domain"/>
</dbReference>
<dbReference type="InterPro" id="IPR035963">
    <property type="entry name" value="FERM_2"/>
</dbReference>
<dbReference type="InterPro" id="IPR019748">
    <property type="entry name" value="FERM_central"/>
</dbReference>
<dbReference type="InterPro" id="IPR000299">
    <property type="entry name" value="FERM_domain"/>
</dbReference>
<dbReference type="InterPro" id="IPR041155">
    <property type="entry name" value="FERM_F1"/>
</dbReference>
<dbReference type="InterPro" id="IPR041046">
    <property type="entry name" value="FERM_F2"/>
</dbReference>
<dbReference type="InterPro" id="IPR051286">
    <property type="entry name" value="JAK"/>
</dbReference>
<dbReference type="InterPro" id="IPR041381">
    <property type="entry name" value="JAK1-3/TYK2_PHL_dom"/>
</dbReference>
<dbReference type="InterPro" id="IPR037838">
    <property type="entry name" value="JAK2_FERM_C-lobe"/>
</dbReference>
<dbReference type="InterPro" id="IPR035860">
    <property type="entry name" value="JAK2_SH2"/>
</dbReference>
<dbReference type="InterPro" id="IPR011009">
    <property type="entry name" value="Kinase-like_dom_sf"/>
</dbReference>
<dbReference type="InterPro" id="IPR011993">
    <property type="entry name" value="PH-like_dom_sf"/>
</dbReference>
<dbReference type="InterPro" id="IPR000719">
    <property type="entry name" value="Prot_kinase_dom"/>
</dbReference>
<dbReference type="InterPro" id="IPR017441">
    <property type="entry name" value="Protein_kinase_ATP_BS"/>
</dbReference>
<dbReference type="InterPro" id="IPR035588">
    <property type="entry name" value="PTK_Jak2_rpt1"/>
</dbReference>
<dbReference type="InterPro" id="IPR035589">
    <property type="entry name" value="PTKc_Jak2_rpt2"/>
</dbReference>
<dbReference type="InterPro" id="IPR001245">
    <property type="entry name" value="Ser-Thr/Tyr_kinase_cat_dom"/>
</dbReference>
<dbReference type="InterPro" id="IPR000980">
    <property type="entry name" value="SH2"/>
</dbReference>
<dbReference type="InterPro" id="IPR036860">
    <property type="entry name" value="SH2_dom_sf"/>
</dbReference>
<dbReference type="InterPro" id="IPR008266">
    <property type="entry name" value="Tyr_kinase_AS"/>
</dbReference>
<dbReference type="InterPro" id="IPR020635">
    <property type="entry name" value="Tyr_kinase_cat_dom"/>
</dbReference>
<dbReference type="InterPro" id="IPR016251">
    <property type="entry name" value="Tyr_kinase_non-rcpt_Jak/Tyk2"/>
</dbReference>
<dbReference type="InterPro" id="IPR020693">
    <property type="entry name" value="Tyr_kinase_non-rcpt_Jak2"/>
</dbReference>
<dbReference type="PANTHER" id="PTHR45807">
    <property type="entry name" value="TYROSINE-PROTEIN KINASE HOPSCOTCH"/>
    <property type="match status" value="1"/>
</dbReference>
<dbReference type="PANTHER" id="PTHR45807:SF1">
    <property type="entry name" value="TYROSINE-PROTEIN KINASE JAK2"/>
    <property type="match status" value="1"/>
</dbReference>
<dbReference type="Pfam" id="PF18379">
    <property type="entry name" value="FERM_F1"/>
    <property type="match status" value="1"/>
</dbReference>
<dbReference type="Pfam" id="PF18377">
    <property type="entry name" value="FERM_F2"/>
    <property type="match status" value="1"/>
</dbReference>
<dbReference type="Pfam" id="PF17887">
    <property type="entry name" value="Jak1_Phl"/>
    <property type="match status" value="1"/>
</dbReference>
<dbReference type="Pfam" id="PF07714">
    <property type="entry name" value="PK_Tyr_Ser-Thr"/>
    <property type="match status" value="2"/>
</dbReference>
<dbReference type="Pfam" id="PF21990">
    <property type="entry name" value="SH2_1"/>
    <property type="match status" value="1"/>
</dbReference>
<dbReference type="PIRSF" id="PIRSF000636">
    <property type="entry name" value="TyrPK_Jak"/>
    <property type="match status" value="1"/>
</dbReference>
<dbReference type="PRINTS" id="PR01823">
    <property type="entry name" value="JANUSKINASE"/>
</dbReference>
<dbReference type="PRINTS" id="PR01825">
    <property type="entry name" value="JANUSKINASE2"/>
</dbReference>
<dbReference type="PRINTS" id="PR00109">
    <property type="entry name" value="TYRKINASE"/>
</dbReference>
<dbReference type="SMART" id="SM00295">
    <property type="entry name" value="B41"/>
    <property type="match status" value="1"/>
</dbReference>
<dbReference type="SMART" id="SM00252">
    <property type="entry name" value="SH2"/>
    <property type="match status" value="1"/>
</dbReference>
<dbReference type="SMART" id="SM00219">
    <property type="entry name" value="TyrKc"/>
    <property type="match status" value="2"/>
</dbReference>
<dbReference type="SUPFAM" id="SSF50729">
    <property type="entry name" value="PH domain-like"/>
    <property type="match status" value="1"/>
</dbReference>
<dbReference type="SUPFAM" id="SSF56112">
    <property type="entry name" value="Protein kinase-like (PK-like)"/>
    <property type="match status" value="2"/>
</dbReference>
<dbReference type="SUPFAM" id="SSF47031">
    <property type="entry name" value="Second domain of FERM"/>
    <property type="match status" value="1"/>
</dbReference>
<dbReference type="SUPFAM" id="SSF55550">
    <property type="entry name" value="SH2 domain"/>
    <property type="match status" value="1"/>
</dbReference>
<dbReference type="PROSITE" id="PS50057">
    <property type="entry name" value="FERM_3"/>
    <property type="match status" value="1"/>
</dbReference>
<dbReference type="PROSITE" id="PS00107">
    <property type="entry name" value="PROTEIN_KINASE_ATP"/>
    <property type="match status" value="1"/>
</dbReference>
<dbReference type="PROSITE" id="PS50011">
    <property type="entry name" value="PROTEIN_KINASE_DOM"/>
    <property type="match status" value="2"/>
</dbReference>
<dbReference type="PROSITE" id="PS00109">
    <property type="entry name" value="PROTEIN_KINASE_TYR"/>
    <property type="match status" value="1"/>
</dbReference>
<dbReference type="PROSITE" id="PS50001">
    <property type="entry name" value="SH2"/>
    <property type="match status" value="1"/>
</dbReference>
<keyword id="KW-0002">3D-structure</keyword>
<keyword id="KW-1064">Adaptive immunity</keyword>
<keyword id="KW-0067">ATP-binding</keyword>
<keyword id="KW-0156">Chromatin regulator</keyword>
<keyword id="KW-0160">Chromosomal rearrangement</keyword>
<keyword id="KW-0963">Cytoplasm</keyword>
<keyword id="KW-0225">Disease variant</keyword>
<keyword id="KW-0391">Immunity</keyword>
<keyword id="KW-0399">Innate immunity</keyword>
<keyword id="KW-0418">Kinase</keyword>
<keyword id="KW-0460">Magnesium</keyword>
<keyword id="KW-0472">Membrane</keyword>
<keyword id="KW-0479">Metal-binding</keyword>
<keyword id="KW-0547">Nucleotide-binding</keyword>
<keyword id="KW-0539">Nucleus</keyword>
<keyword id="KW-0597">Phosphoprotein</keyword>
<keyword id="KW-1267">Proteomics identification</keyword>
<keyword id="KW-0656">Proto-oncogene</keyword>
<keyword id="KW-1185">Reference proteome</keyword>
<keyword id="KW-0677">Repeat</keyword>
<keyword id="KW-0727">SH2 domain</keyword>
<keyword id="KW-0808">Transferase</keyword>
<keyword id="KW-0829">Tyrosine-protein kinase</keyword>
<keyword id="KW-0832">Ubl conjugation</keyword>
<reference key="1">
    <citation type="journal article" date="1998" name="Biochem. Biophys. Res. Commun.">
        <title>Cloning and characterization of human Jak-2 kinase: high mRNA expression in immune cells and muscle tissue.</title>
        <authorList>
            <person name="Saltzman A."/>
            <person name="Stone M."/>
            <person name="Franks C."/>
            <person name="Searfoss G."/>
            <person name="Munro R."/>
            <person name="Jaye M."/>
            <person name="Ivashchenko Y."/>
        </authorList>
    </citation>
    <scope>NUCLEOTIDE SEQUENCE [MRNA]</scope>
    <scope>FUNCTION</scope>
    <scope>CATALYTIC ACTIVITY</scope>
</reference>
<reference key="2">
    <citation type="journal article" date="1998" name="Blood">
        <title>Cloning and characterization of the human homolog of mouse Jak2.</title>
        <authorList>
            <person name="Dalal I."/>
            <person name="Arpaia E."/>
            <person name="Dadi H."/>
            <person name="Kulkarni S."/>
            <person name="Squire J."/>
            <person name="Roifman C.M."/>
        </authorList>
    </citation>
    <scope>NUCLEOTIDE SEQUENCE [MRNA]</scope>
</reference>
<reference key="3">
    <citation type="journal article" date="1997" name="Blood">
        <title>Fusion of TEL, the ETS-variant gene 6 (ETV6), to the receptor-associated kinase JAK2 as a result of t(9;12) in a lymphoid and t(9;15;12) in a myeloid leukemia.</title>
        <authorList>
            <person name="Peeters P."/>
            <person name="Raynaud S.D."/>
            <person name="Cools J."/>
            <person name="Wlodarska I."/>
            <person name="Grosgeorge J."/>
            <person name="Philip P."/>
            <person name="Monpoux F."/>
            <person name="Van Rompaey L."/>
            <person name="Baens M."/>
            <person name="Van Den Berghe H."/>
            <person name="Marynen P."/>
        </authorList>
    </citation>
    <scope>NUCLEOTIDE SEQUENCE [MRNA]</scope>
    <scope>CHROMOSOMAL TRANSLOCATION WITH ETV6</scope>
</reference>
<reference key="4">
    <citation type="journal article" date="2004" name="Nature">
        <title>DNA sequence and analysis of human chromosome 9.</title>
        <authorList>
            <person name="Humphray S.J."/>
            <person name="Oliver K."/>
            <person name="Hunt A.R."/>
            <person name="Plumb R.W."/>
            <person name="Loveland J.E."/>
            <person name="Howe K.L."/>
            <person name="Andrews T.D."/>
            <person name="Searle S."/>
            <person name="Hunt S.E."/>
            <person name="Scott C.E."/>
            <person name="Jones M.C."/>
            <person name="Ainscough R."/>
            <person name="Almeida J.P."/>
            <person name="Ambrose K.D."/>
            <person name="Ashwell R.I.S."/>
            <person name="Babbage A.K."/>
            <person name="Babbage S."/>
            <person name="Bagguley C.L."/>
            <person name="Bailey J."/>
            <person name="Banerjee R."/>
            <person name="Barker D.J."/>
            <person name="Barlow K.F."/>
            <person name="Bates K."/>
            <person name="Beasley H."/>
            <person name="Beasley O."/>
            <person name="Bird C.P."/>
            <person name="Bray-Allen S."/>
            <person name="Brown A.J."/>
            <person name="Brown J.Y."/>
            <person name="Burford D."/>
            <person name="Burrill W."/>
            <person name="Burton J."/>
            <person name="Carder C."/>
            <person name="Carter N.P."/>
            <person name="Chapman J.C."/>
            <person name="Chen Y."/>
            <person name="Clarke G."/>
            <person name="Clark S.Y."/>
            <person name="Clee C.M."/>
            <person name="Clegg S."/>
            <person name="Collier R.E."/>
            <person name="Corby N."/>
            <person name="Crosier M."/>
            <person name="Cummings A.T."/>
            <person name="Davies J."/>
            <person name="Dhami P."/>
            <person name="Dunn M."/>
            <person name="Dutta I."/>
            <person name="Dyer L.W."/>
            <person name="Earthrowl M.E."/>
            <person name="Faulkner L."/>
            <person name="Fleming C.J."/>
            <person name="Frankish A."/>
            <person name="Frankland J.A."/>
            <person name="French L."/>
            <person name="Fricker D.G."/>
            <person name="Garner P."/>
            <person name="Garnett J."/>
            <person name="Ghori J."/>
            <person name="Gilbert J.G.R."/>
            <person name="Glison C."/>
            <person name="Grafham D.V."/>
            <person name="Gribble S."/>
            <person name="Griffiths C."/>
            <person name="Griffiths-Jones S."/>
            <person name="Grocock R."/>
            <person name="Guy J."/>
            <person name="Hall R.E."/>
            <person name="Hammond S."/>
            <person name="Harley J.L."/>
            <person name="Harrison E.S.I."/>
            <person name="Hart E.A."/>
            <person name="Heath P.D."/>
            <person name="Henderson C.D."/>
            <person name="Hopkins B.L."/>
            <person name="Howard P.J."/>
            <person name="Howden P.J."/>
            <person name="Huckle E."/>
            <person name="Johnson C."/>
            <person name="Johnson D."/>
            <person name="Joy A.A."/>
            <person name="Kay M."/>
            <person name="Keenan S."/>
            <person name="Kershaw J.K."/>
            <person name="Kimberley A.M."/>
            <person name="King A."/>
            <person name="Knights A."/>
            <person name="Laird G.K."/>
            <person name="Langford C."/>
            <person name="Lawlor S."/>
            <person name="Leongamornlert D.A."/>
            <person name="Leversha M."/>
            <person name="Lloyd C."/>
            <person name="Lloyd D.M."/>
            <person name="Lovell J."/>
            <person name="Martin S."/>
            <person name="Mashreghi-Mohammadi M."/>
            <person name="Matthews L."/>
            <person name="McLaren S."/>
            <person name="McLay K.E."/>
            <person name="McMurray A."/>
            <person name="Milne S."/>
            <person name="Nickerson T."/>
            <person name="Nisbett J."/>
            <person name="Nordsiek G."/>
            <person name="Pearce A.V."/>
            <person name="Peck A.I."/>
            <person name="Porter K.M."/>
            <person name="Pandian R."/>
            <person name="Pelan S."/>
            <person name="Phillimore B."/>
            <person name="Povey S."/>
            <person name="Ramsey Y."/>
            <person name="Rand V."/>
            <person name="Scharfe M."/>
            <person name="Sehra H.K."/>
            <person name="Shownkeen R."/>
            <person name="Sims S.K."/>
            <person name="Skuce C.D."/>
            <person name="Smith M."/>
            <person name="Steward C.A."/>
            <person name="Swarbreck D."/>
            <person name="Sycamore N."/>
            <person name="Tester J."/>
            <person name="Thorpe A."/>
            <person name="Tracey A."/>
            <person name="Tromans A."/>
            <person name="Thomas D.W."/>
            <person name="Wall M."/>
            <person name="Wallis J.M."/>
            <person name="West A.P."/>
            <person name="Whitehead S.L."/>
            <person name="Willey D.L."/>
            <person name="Williams S.A."/>
            <person name="Wilming L."/>
            <person name="Wray P.W."/>
            <person name="Young L."/>
            <person name="Ashurst J.L."/>
            <person name="Coulson A."/>
            <person name="Blocker H."/>
            <person name="Durbin R.M."/>
            <person name="Sulston J.E."/>
            <person name="Hubbard T."/>
            <person name="Jackson M.J."/>
            <person name="Bentley D.R."/>
            <person name="Beck S."/>
            <person name="Rogers J."/>
            <person name="Dunham I."/>
        </authorList>
    </citation>
    <scope>NUCLEOTIDE SEQUENCE [LARGE SCALE GENOMIC DNA]</scope>
</reference>
<reference key="5">
    <citation type="journal article" date="1995" name="J. Biol. Chem.">
        <title>The Jak kinases differentially associate with the alpha and beta (accessory factor) chains of the interferon gamma receptor to form a functional receptor unit capable of activating STAT transcription factors.</title>
        <authorList>
            <person name="Sakatsume M."/>
            <person name="Igarashi K."/>
            <person name="Winestock K.D."/>
            <person name="Garotta G."/>
            <person name="Larner A.C."/>
            <person name="Finbloom D.S."/>
        </authorList>
    </citation>
    <scope>FUNCTION</scope>
    <scope>CATALYTIC ACTIVITY</scope>
    <scope>COFACTOR</scope>
    <scope>INTERACTION WITH IFNGR2</scope>
    <scope>PHOSPHORYLATION</scope>
</reference>
<reference key="6">
    <citation type="journal article" date="1995" name="J. Biol. Chem.">
        <title>Interaction between the components of the interferon gamma receptor complex.</title>
        <authorList>
            <person name="Kotenko S.V."/>
            <person name="Izotova L.S."/>
            <person name="Pollack B.P."/>
            <person name="Mariano T.M."/>
            <person name="Donnelly R.J."/>
            <person name="Muthukumaran G."/>
            <person name="Cook J.R."/>
            <person name="Garotta G."/>
            <person name="Silvennoinen O."/>
            <person name="Ihle J.N."/>
        </authorList>
    </citation>
    <scope>INTERACTION WITH IFNGR2</scope>
    <scope>PHOSPHORYLATION</scope>
</reference>
<reference key="7">
    <citation type="journal article" date="1998" name="Blood">
        <title>Erythropoietin induces tyrosine phosphorylation of Jak2, STAT5A, and STAT5B in primary cultured human erythroid precursors.</title>
        <authorList>
            <person name="Oda A."/>
            <person name="Sawada K."/>
            <person name="Druker B.J."/>
            <person name="Ozaki K."/>
            <person name="Takano H."/>
            <person name="Koizumi K."/>
            <person name="Fukada Y."/>
            <person name="Handa M."/>
            <person name="Koike T."/>
            <person name="Ikeda Y."/>
        </authorList>
    </citation>
    <scope>FUNCTION</scope>
    <scope>CATALYTIC ACTIVITY</scope>
</reference>
<reference key="8">
    <citation type="journal article" date="1999" name="J. Biol. Chem.">
        <title>The human homologue of the yeast proteins Skb1 and Hsl7p interacts with Jak kinases and contains protein methyltransferase activity.</title>
        <authorList>
            <person name="Pollack B.P."/>
            <person name="Kotenko S.V."/>
            <person name="He W."/>
            <person name="Izotova L.S."/>
            <person name="Barnoski B.L."/>
            <person name="Pestka S."/>
        </authorList>
    </citation>
    <scope>INTERACTION WITH SKB1</scope>
</reference>
<reference key="9">
    <citation type="journal article" date="2000" name="FEBS Lett.">
        <title>STAM2, a new member of the STAM family, binding to the Janus kinases.</title>
        <authorList>
            <person name="Endo K."/>
            <person name="Takeshita T."/>
            <person name="Kasai H."/>
            <person name="Sasaki Y."/>
            <person name="Tanaka N."/>
            <person name="Asao H."/>
            <person name="Kikuchi K."/>
            <person name="Yamada M."/>
            <person name="Chenb M."/>
            <person name="O'Shea J.J."/>
            <person name="Sugamura K."/>
        </authorList>
    </citation>
    <scope>INTERACTION WITH STAM2</scope>
    <source>
        <tissue>Fetal brain</tissue>
    </source>
</reference>
<reference key="10">
    <citation type="journal article" date="2002" name="J. Immunol.">
        <title>A receptor for the heterodimeric cytokine IL-23 is composed of IL-12Rbeta1 and a novel cytokine receptor subunit, IL-23R.</title>
        <authorList>
            <person name="Parham C."/>
            <person name="Chirica M."/>
            <person name="Timans J."/>
            <person name="Vaisberg E."/>
            <person name="Travis M."/>
            <person name="Cheung J."/>
            <person name="Pflanz S."/>
            <person name="Zhang R."/>
            <person name="Singh K.P."/>
            <person name="Vega F."/>
            <person name="To W."/>
            <person name="Wagner J."/>
            <person name="O'Farrell A.-M."/>
            <person name="McClanahan T.K."/>
            <person name="Zurawski S."/>
            <person name="Hannum C."/>
            <person name="Gorman D."/>
            <person name="Rennick D.M."/>
            <person name="Kastelein R.A."/>
            <person name="de Waal Malefyt R."/>
            <person name="Moore K.W."/>
        </authorList>
    </citation>
    <scope>FUNCTION</scope>
    <scope>INTERACTION WITH IL23R</scope>
</reference>
<reference key="11">
    <citation type="journal article" date="2005" name="Cancer Res.">
        <title>The t(8;9)(p22;p24) is a recurrent abnormality in chronic and acute leukemia that fuses PCM1 to JAK2.</title>
        <authorList>
            <person name="Reiter A."/>
            <person name="Walz C."/>
            <person name="Watmore A."/>
            <person name="Schoch C."/>
            <person name="Blau I."/>
            <person name="Schlegelberger B."/>
            <person name="Berger U."/>
            <person name="Telford N."/>
            <person name="Aruliah S."/>
            <person name="Yin J.A."/>
            <person name="Vanstraelen D."/>
            <person name="Barker H.F."/>
            <person name="Taylor P.C."/>
            <person name="O'Driscoll A."/>
            <person name="Benedetti F."/>
            <person name="Rudolph C."/>
            <person name="Kolb H.-J."/>
            <person name="Hochhaus A."/>
            <person name="Hehlmann R."/>
            <person name="Chase A."/>
            <person name="Cross N.C.P."/>
        </authorList>
    </citation>
    <scope>CHROMOSOMAL TRANSLOCATION WITH PCM1</scope>
</reference>
<reference key="12">
    <citation type="journal article" date="2005" name="Leukemia">
        <title>PCM1-JAK2 fusion in myeloproliferative disorders and acute erythroid leukemia with t(8;9) translocation.</title>
        <authorList>
            <person name="Murati A."/>
            <person name="Gelsi-Boyer V."/>
            <person name="Adelaide J."/>
            <person name="Perot C."/>
            <person name="Talmant P."/>
            <person name="Giraudier S."/>
            <person name="Lode L."/>
            <person name="Letessier A."/>
            <person name="Delaval B."/>
            <person name="Brunel V."/>
            <person name="Imbert M."/>
            <person name="Garand R."/>
            <person name="Xerri L."/>
            <person name="Birnbaum D."/>
            <person name="Mozziconacci M.-J."/>
            <person name="Chaffanet M."/>
        </authorList>
    </citation>
    <scope>CHROMOSOMAL TRANSLOCATION WITH PCM1</scope>
</reference>
<reference key="13">
    <citation type="journal article" date="2005" name="Oncogene">
        <title>The t(8;9)(p22;p24) translocation in atypical chronic myeloid leukaemia yields a new PCM1-JAK2 fusion gene.</title>
        <authorList>
            <person name="Bousquet M."/>
            <person name="Quelen C."/>
            <person name="De Mas V."/>
            <person name="Duchayne E."/>
            <person name="Roquefeuil B."/>
            <person name="Delsol G."/>
            <person name="Laurent G."/>
            <person name="Dastugue N."/>
            <person name="Brousset P."/>
        </authorList>
    </citation>
    <scope>CHROMOSOMAL TRANSLOCATION WITH PCM1</scope>
</reference>
<reference key="14">
    <citation type="journal article" date="2006" name="Haematologica">
        <title>A combination of cytomorphology, cytogenetic analysis, fluorescence in situ hybridization and reverse transcriptase polymerase chain reaction for establishing clonality in cases of persisting hypereosinophilia.</title>
        <authorList>
            <person name="Bacher U."/>
            <person name="Reiter A."/>
            <person name="Haferlach T."/>
            <person name="Mueller L."/>
            <person name="Schnittger S."/>
            <person name="Kern W."/>
            <person name="Schoch C."/>
        </authorList>
    </citation>
    <scope>CHROMOSOMAL TRANSLOCATION WITH PCM1</scope>
</reference>
<reference key="15">
    <citation type="journal article" date="2005" name="J. Biol. Chem.">
        <title>Janus kinases affect thrombopoietin receptor cell surface localization and stability.</title>
        <authorList>
            <person name="Royer Y."/>
            <person name="Staerk J."/>
            <person name="Costuleanu M."/>
            <person name="Courtoy P.J."/>
            <person name="Constantinescu S.N."/>
        </authorList>
    </citation>
    <scope>FUNCTION</scope>
    <scope>INTERACTION WITH MPL/TPOR</scope>
</reference>
<reference key="16">
    <citation type="journal article" date="2006" name="Leukemia">
        <title>A t(8;9) translocation with PCM1-JAK2 fusion in a patient with T-cell lymphoma.</title>
        <authorList>
            <person name="Adelaide J."/>
            <person name="Perot C."/>
            <person name="Gelsi-Boyer V."/>
            <person name="Pautas C."/>
            <person name="Murati A."/>
            <person name="Copie-Bergman C."/>
            <person name="Imbert M."/>
            <person name="Chaffanet M."/>
            <person name="Birnbaum D."/>
            <person name="Mozziconacci M.-J."/>
        </authorList>
    </citation>
    <scope>TISSUE SPECIFICITY</scope>
    <scope>CHROMOSOMAL TRANSLOCATION WITH PCM1</scope>
</reference>
<reference key="17">
    <citation type="journal article" date="2009" name="Nature">
        <title>JAK2 phosphorylates histone H3Y41 and excludes HP1alpha from chromatin.</title>
        <authorList>
            <person name="Dawson M.A."/>
            <person name="Bannister A.J."/>
            <person name="Gottgens B."/>
            <person name="Foster S.D."/>
            <person name="Bartke T."/>
            <person name="Green A.R."/>
            <person name="Kouzarides T."/>
        </authorList>
    </citation>
    <scope>FUNCTION</scope>
    <scope>SUBCELLULAR LOCATION</scope>
</reference>
<reference key="18">
    <citation type="journal article" date="2010" name="Biochem. Biophys. Res. Commun.">
        <title>Heme controls the regulation of protein tyrosine kinases Jak2 and Src.</title>
        <authorList>
            <person name="Yao X."/>
            <person name="Balamurugan P."/>
            <person name="Arvey A."/>
            <person name="Leslie C."/>
            <person name="Zhang L."/>
        </authorList>
    </citation>
    <scope>ACTIVITY REGULATION</scope>
</reference>
<reference key="19">
    <citation type="journal article" date="2010" name="Cell. Signal.">
        <title>Stat1 mediates an auto-regulation of hsp90beta gene in heat shock response.</title>
        <authorList>
            <person name="Cheng M.B."/>
            <person name="Zhang Y."/>
            <person name="Zhong X."/>
            <person name="Sutter B."/>
            <person name="Cao C.Y."/>
            <person name="Chen X.S."/>
            <person name="Cheng X.K."/>
            <person name="Zhang Y."/>
            <person name="Xiao L."/>
            <person name="Shen Y.F."/>
        </authorList>
    </citation>
    <scope>INTERACTION WITH HSP90AB1</scope>
</reference>
<reference key="20">
    <citation type="journal article" date="2010" name="Nat. Med.">
        <title>The Rho exchange factor Arhgef1 mediates the effects of angiotensin II on vascular tone and blood pressure.</title>
        <authorList>
            <person name="Guilluy C."/>
            <person name="Bregeon J."/>
            <person name="Toumaniantz G."/>
            <person name="Rolli-Derkinderen M."/>
            <person name="Retailleau K."/>
            <person name="Loufrani L."/>
            <person name="Henrion D."/>
            <person name="Scalbert E."/>
            <person name="Bril A."/>
            <person name="Torres R.M."/>
            <person name="Offermanns S."/>
            <person name="Pacaud P."/>
            <person name="Loirand G."/>
        </authorList>
    </citation>
    <scope>FUNCTION</scope>
</reference>
<reference key="21">
    <citation type="journal article" date="2011" name="Oncogene">
        <title>Phosphorylation of p27Kip1 by JAK2 directly links cytokine receptor signaling to cell cycle control.</title>
        <authorList>
            <person name="Jakel H."/>
            <person name="Weinl C."/>
            <person name="Hengst L."/>
        </authorList>
    </citation>
    <scope>FUNCTION IN PHOSPHORYLATION OF CDKN1B</scope>
</reference>
<reference key="22">
    <citation type="journal article" date="2011" name="Proc. Natl. Acad. Sci. U.S.A.">
        <title>Signaling by vitamin A and retinol-binding protein regulates gene expression to inhibit insulin responses.</title>
        <authorList>
            <person name="Berry D.C."/>
            <person name="Jin H."/>
            <person name="Majumdar A."/>
            <person name="Noy N."/>
        </authorList>
    </citation>
    <scope>FUNCTION</scope>
    <scope>INTERACTION WITH STRA6</scope>
    <scope>PHOSPHORYLATION</scope>
</reference>
<reference key="23">
    <citation type="journal article" date="2006" name="Cell Biochem. Biophys.">
        <title>Jak2 tyrosine kinase: a mediator of both housekeeping and ligand-dependent gene expression?</title>
        <authorList>
            <person name="Wallace T.A."/>
            <person name="Sayeski P.P."/>
        </authorList>
    </citation>
    <scope>REVIEW ON FUNCTION</scope>
</reference>
<reference key="24">
    <citation type="journal article" date="2009" name="Immunol. Rev.">
        <title>Janus kinases in immune cell signaling.</title>
        <authorList>
            <person name="Ghoreschi K."/>
            <person name="Laurence A."/>
            <person name="O'Shea J.J."/>
        </authorList>
    </citation>
    <scope>REVIEW ON FUNCTION</scope>
</reference>
<reference key="25">
    <citation type="journal article" date="2011" name="Cell Res.">
        <title>Notch-induced Asb2 expression promotes protein ubiquitination by forming non-canonical E3 ligase complexes.</title>
        <authorList>
            <person name="Nie L."/>
            <person name="Zhao Y."/>
            <person name="Wu W."/>
            <person name="Yang Y.Z."/>
            <person name="Wang H.C."/>
            <person name="Sun X.H."/>
        </authorList>
    </citation>
    <scope>INTERACTION WITH ASB2</scope>
    <scope>PROTEASOMAL DEGRADATION</scope>
</reference>
<reference key="26">
    <citation type="journal article" date="2013" name="J. Proteome Res.">
        <title>Toward a comprehensive characterization of a human cancer cell phosphoproteome.</title>
        <authorList>
            <person name="Zhou H."/>
            <person name="Di Palma S."/>
            <person name="Preisinger C."/>
            <person name="Peng M."/>
            <person name="Polat A.N."/>
            <person name="Heck A.J."/>
            <person name="Mohammed S."/>
        </authorList>
    </citation>
    <scope>PHOSPHORYLATION [LARGE SCALE ANALYSIS] AT TYR-570</scope>
    <scope>IDENTIFICATION BY MASS SPECTROMETRY [LARGE SCALE ANALYSIS]</scope>
    <source>
        <tissue>Erythroleukemia</tissue>
    </source>
</reference>
<reference key="27">
    <citation type="journal article" date="2014" name="J. Exp. Med.">
        <title>RHEX, a novel regulator of human erythroid progenitor cell expansion and erythroblast development.</title>
        <authorList>
            <person name="Verma R."/>
            <person name="Su S."/>
            <person name="McCrann D.J."/>
            <person name="Green J.M."/>
            <person name="Leu K."/>
            <person name="Young P.R."/>
            <person name="Schatz P.J."/>
            <person name="Silva J.C."/>
            <person name="Stokes M.P."/>
            <person name="Wojchowski D.M."/>
        </authorList>
    </citation>
    <scope>INTERACTION WITH RHEX</scope>
</reference>
<reference key="28">
    <citation type="journal article" date="2005" name="J. Clin. Invest.">
        <title>SOCS2 negatively regulates growth hormone action in vitro and in vivo.</title>
        <authorList>
            <person name="Greenhalgh C.J."/>
            <person name="Rico-Bautista E."/>
            <person name="Lorentzon M."/>
            <person name="Thaus A.L."/>
            <person name="Morgan P.O."/>
            <person name="Willson T.A."/>
            <person name="Zervoudakis P."/>
            <person name="Metcalf D."/>
            <person name="Street I."/>
            <person name="Nicola N.A."/>
            <person name="Nash A.D."/>
            <person name="Fabri L.J."/>
            <person name="Norstedt G."/>
            <person name="Ohlsson C."/>
            <person name="Flores-Morales A."/>
            <person name="Alexander W.S."/>
            <person name="Hilton D.J."/>
        </authorList>
    </citation>
    <scope>FUNCTION</scope>
    <scope>CATALYTIC ACTIVITY</scope>
</reference>
<reference key="29">
    <citation type="journal article" date="2006" name="Blood">
        <title>The structural basis of Janus kinase 2 inhibition by a potent and specific pan-Janus kinase inhibitor.</title>
        <authorList>
            <person name="Lucet I.S."/>
            <person name="Fantino E."/>
            <person name="Styles M."/>
            <person name="Bamert R."/>
            <person name="Patel O."/>
            <person name="Broughton S.E."/>
            <person name="Walter M."/>
            <person name="Burns C.J."/>
            <person name="Treutlein H."/>
            <person name="Wilks A.F."/>
            <person name="Rossjohn J."/>
        </authorList>
    </citation>
    <scope>X-RAY CRYSTALLOGRAPHY (2.0 ANGSTROMS) OF 840-1132 IN COMPLEX WITH SYNTHETIC INHIBITOR</scope>
    <scope>CATALYTIC ACTIVITY</scope>
    <scope>IDENTIFICATION BY MASS SPECTROMETRY</scope>
    <scope>PHOSPHORYLATION AT TYR-1007 AND TYR-1008</scope>
</reference>
<reference key="30">
    <citation type="journal article" date="2005" name="Lancet">
        <title>Acquired mutation of the tyrosine kinase JAK2 in human myeloproliferative disorders.</title>
        <authorList>
            <consortium name="The cancer genome project"/>
            <person name="Baxter E.J."/>
            <person name="Scott L.M."/>
            <person name="Campbell P.J."/>
            <person name="East C."/>
            <person name="Fourouclas N."/>
            <person name="Swanton S."/>
            <person name="Vassiliou G.S."/>
            <person name="Bench A.J."/>
            <person name="Boyd E.M."/>
            <person name="Curtin N."/>
            <person name="Scott M.A."/>
            <person name="Erber W.N."/>
            <person name="Green A.R."/>
        </authorList>
    </citation>
    <scope>VARIANT PV PHE-617</scope>
</reference>
<reference key="31">
    <citation type="journal article" date="2005" name="Lancet">
        <authorList>
            <consortium name="The cancer genome project"/>
            <person name="Baxter E.J."/>
            <person name="Scott L.M."/>
            <person name="Campbell P.J."/>
            <person name="East C."/>
            <person name="Fourouclas N."/>
            <person name="Swanton S."/>
            <person name="Vassiliou G.S."/>
            <person name="Bench A.J."/>
            <person name="Boyd E.M."/>
            <person name="Curtin N."/>
            <person name="Scott M.A."/>
            <person name="Erber W.N."/>
            <person name="Green A.R."/>
        </authorList>
    </citation>
    <scope>ERRATUM OF PUBMED:15781101</scope>
</reference>
<reference key="32">
    <citation type="journal article" date="2005" name="Lancet">
        <title>Definition of subtypes of essential thrombocythaemia and relation to polycythaemia vera based on JAK2 V617F mutation status: a prospective study.</title>
        <authorList>
            <consortium name="The United Kingdom myeloproliferative disorders study group"/>
            <consortium name="The medical research council adult leukaemia working party"/>
            <consortium name="The Australasian leukaemia and lymphoma group"/>
            <person name="Campbell P.J."/>
            <person name="Scott L.M."/>
            <person name="Buck G."/>
            <person name="Wheatley K."/>
            <person name="East C.L."/>
            <person name="Marsden J.T."/>
            <person name="Duffy A."/>
            <person name="Boyd E.M."/>
            <person name="Bench A.J."/>
            <person name="Scott M.A."/>
            <person name="Vassiliou G.S."/>
            <person name="Milligan D.W."/>
            <person name="Smith S.R."/>
            <person name="Erber W.N."/>
            <person name="Bareford D."/>
            <person name="Wilkins B.S."/>
            <person name="Reilly J.T."/>
            <person name="Harrison C.N."/>
            <person name="Green A.R."/>
        </authorList>
    </citation>
    <scope>VARIANT THCYT3 PHE-617</scope>
</reference>
<reference key="33">
    <citation type="journal article" date="2005" name="Nature">
        <title>A unique clonal JAK2 mutation leading to constitutive signalling causes polycythaemia vera.</title>
        <authorList>
            <person name="James C."/>
            <person name="Ugo V."/>
            <person name="Le Couedic J.-P."/>
            <person name="Staerk J."/>
            <person name="Delhommeau F."/>
            <person name="Lacout C."/>
            <person name="Garcon L."/>
            <person name="Raslova H."/>
            <person name="Berger R."/>
            <person name="Bennaceur-Griscelli A."/>
            <person name="Villeval J.L."/>
            <person name="Constantinescu S.N."/>
            <person name="Casadevall N."/>
            <person name="Vainchenker W."/>
        </authorList>
    </citation>
    <scope>VARIANT PV PHE-617</scope>
    <scope>CHARACTERIZATION OF VARIANT PV PHE-617</scope>
</reference>
<reference key="34">
    <citation type="journal article" date="2005" name="N. Engl. J. Med.">
        <title>A gain-of-function mutation of JAK2 in myeloproliferative disorders.</title>
        <authorList>
            <person name="Kralovics R."/>
            <person name="Passamonti F."/>
            <person name="Buser A.S."/>
            <person name="Teo S.-S."/>
            <person name="Tiedt R."/>
            <person name="Passweg J.R."/>
            <person name="Tichelli A."/>
            <person name="Cazzola M."/>
            <person name="Skoda R.C."/>
        </authorList>
    </citation>
    <scope>VARIANT PV PHE-617</scope>
</reference>
<reference key="35">
    <citation type="journal article" date="2006" name="N. Engl. J. Med.">
        <title>Case records of the Massachusetts General Hospital. Case 15-2006: a 46-year-old woman with sudden onset of abdominal distention.</title>
        <authorList>
            <person name="Chung R.T."/>
            <person name="Iafrate A.J."/>
            <person name="Amrein P.C."/>
            <person name="Sahani D.V."/>
            <person name="Misdraji J."/>
        </authorList>
    </citation>
    <scope>ASSOCIATION OF VARIANT PHE-617 WITH SUSCEPTIBILITY BUDD-CHIARI SYNDROME</scope>
</reference>
<reference key="36">
    <citation type="journal article" date="2006" name="Oncogene">
        <title>The JAK2 V617F mutation in de novo acute myelogenous leukemias.</title>
        <authorList>
            <person name="Lee J.W."/>
            <person name="Kim Y.G."/>
            <person name="Soung Y.H."/>
            <person name="Han K.J."/>
            <person name="Kim S.Y."/>
            <person name="Rhim H.S."/>
            <person name="Min W.S."/>
            <person name="Nam S.W."/>
            <person name="Park W.S."/>
            <person name="Lee J.Y."/>
            <person name="Yoo N.J."/>
            <person name="Lee S.H."/>
        </authorList>
    </citation>
    <scope>VARIANTS AML ASN-607 AND PHE-617</scope>
</reference>
<reference key="37">
    <citation type="journal article" date="2006" name="Proc. Natl. Acad. Sci. U.S.A.">
        <title>The JAK2 V617F mutation occurs in hematopoietic stem cells in polycythemia vera and predisposes toward erythroid differentiation.</title>
        <authorList>
            <person name="Jamieson C.H.M."/>
            <person name="Gotlib J."/>
            <person name="Durocher J.A."/>
            <person name="Chao M.P."/>
            <person name="Mariappan M.R."/>
            <person name="Lay M."/>
            <person name="Jones C."/>
            <person name="Zehnder J.L."/>
            <person name="Lilleberg S.L."/>
            <person name="Weissman I.L."/>
        </authorList>
    </citation>
    <scope>VARIANT PV PHE-617</scope>
</reference>
<reference key="38">
    <citation type="journal article" date="2007" name="N. Engl. J. Med.">
        <title>JAK2 exon 12 mutations in polycythemia vera and idiopathic erythrocytosis.</title>
        <authorList>
            <person name="Scott L.M."/>
            <person name="Tong W."/>
            <person name="Levine R.L."/>
            <person name="Scott M.A."/>
            <person name="Beer P.A."/>
            <person name="Stratton M.R."/>
            <person name="Futreal P.A."/>
            <person name="Erber W.N."/>
            <person name="McMullin M.F."/>
            <person name="Harrison C.N."/>
            <person name="Warren A.J."/>
            <person name="Gilliland D.G."/>
            <person name="Lodish H.F."/>
            <person name="Green A.R."/>
        </authorList>
    </citation>
    <scope>VARIANTS MYELOPROLIFERATIVE DISORDER WITH ERYTHROCYTOSIS 537-PHE--LYS-539 DELINS LEU; 538-HIS-LYS-539 DELINS GLN-LEU AND LEU-539</scope>
</reference>
<reference key="39">
    <citation type="journal article" date="2007" name="Nature">
        <title>Patterns of somatic mutation in human cancer genomes.</title>
        <authorList>
            <person name="Greenman C."/>
            <person name="Stephens P."/>
            <person name="Smith R."/>
            <person name="Dalgliesh G.L."/>
            <person name="Hunter C."/>
            <person name="Bignell G."/>
            <person name="Davies H."/>
            <person name="Teague J."/>
            <person name="Butler A."/>
            <person name="Stevens C."/>
            <person name="Edkins S."/>
            <person name="O'Meara S."/>
            <person name="Vastrik I."/>
            <person name="Schmidt E.E."/>
            <person name="Avis T."/>
            <person name="Barthorpe S."/>
            <person name="Bhamra G."/>
            <person name="Buck G."/>
            <person name="Choudhury B."/>
            <person name="Clements J."/>
            <person name="Cole J."/>
            <person name="Dicks E."/>
            <person name="Forbes S."/>
            <person name="Gray K."/>
            <person name="Halliday K."/>
            <person name="Harrison R."/>
            <person name="Hills K."/>
            <person name="Hinton J."/>
            <person name="Jenkinson A."/>
            <person name="Jones D."/>
            <person name="Menzies A."/>
            <person name="Mironenko T."/>
            <person name="Perry J."/>
            <person name="Raine K."/>
            <person name="Richardson D."/>
            <person name="Shepherd R."/>
            <person name="Small A."/>
            <person name="Tofts C."/>
            <person name="Varian J."/>
            <person name="Webb T."/>
            <person name="West S."/>
            <person name="Widaa S."/>
            <person name="Yates A."/>
            <person name="Cahill D.P."/>
            <person name="Louis D.N."/>
            <person name="Goldstraw P."/>
            <person name="Nicholson A.G."/>
            <person name="Brasseur F."/>
            <person name="Looijenga L."/>
            <person name="Weber B.L."/>
            <person name="Chiew Y.-E."/>
            <person name="DeFazio A."/>
            <person name="Greaves M.F."/>
            <person name="Green A.R."/>
            <person name="Campbell P."/>
            <person name="Birney E."/>
            <person name="Easton D.F."/>
            <person name="Chenevix-Trench G."/>
            <person name="Tan M.-H."/>
            <person name="Khoo S.K."/>
            <person name="Teh B.T."/>
            <person name="Yuen S.T."/>
            <person name="Leung S.Y."/>
            <person name="Wooster R."/>
            <person name="Futreal P.A."/>
            <person name="Stratton M.R."/>
        </authorList>
    </citation>
    <scope>VARIANTS [LARGE SCALE ANALYSIS] ASP-127; GLN-191; ARG-346; GLU-377; VAL-393 AND HIS-1063</scope>
</reference>
<reference key="40">
    <citation type="journal article" date="2012" name="N. Engl. J. Med.">
        <title>Germline JAK2 mutation in a family with hereditary thrombocytosis.</title>
        <authorList>
            <person name="Mead A.J."/>
            <person name="Rugless M.J."/>
            <person name="Jacobsen S.E."/>
            <person name="Schuh A."/>
        </authorList>
    </citation>
    <scope>VARIANT THCYT3 ILE-617</scope>
</reference>
<reference key="41">
    <citation type="journal article" date="2015" name="J. Membr. Biol.">
        <title>Up-regulation of Kv1.3 channels by janus kinase 2.</title>
        <authorList>
            <person name="Hosseinzadeh Z."/>
            <person name="Warsi J."/>
            <person name="Elvira B."/>
            <person name="Almilaji A."/>
            <person name="Shumilina E."/>
            <person name="Lang F."/>
        </authorList>
    </citation>
    <scope>CHARACTERIZATION OF VARIANT PV PHE-617</scope>
    <scope>FUNCTION</scope>
    <scope>MUTAGENESIS OF LYS-882</scope>
</reference>
<proteinExistence type="evidence at protein level"/>
<organism>
    <name type="scientific">Homo sapiens</name>
    <name type="common">Human</name>
    <dbReference type="NCBI Taxonomy" id="9606"/>
    <lineage>
        <taxon>Eukaryota</taxon>
        <taxon>Metazoa</taxon>
        <taxon>Chordata</taxon>
        <taxon>Craniata</taxon>
        <taxon>Vertebrata</taxon>
        <taxon>Euteleostomi</taxon>
        <taxon>Mammalia</taxon>
        <taxon>Eutheria</taxon>
        <taxon>Euarchontoglires</taxon>
        <taxon>Primates</taxon>
        <taxon>Haplorrhini</taxon>
        <taxon>Catarrhini</taxon>
        <taxon>Hominidae</taxon>
        <taxon>Homo</taxon>
    </lineage>
</organism>
<evidence type="ECO:0000250" key="1"/>
<evidence type="ECO:0000250" key="2">
    <source>
        <dbReference type="UniProtKB" id="Q62120"/>
    </source>
</evidence>
<evidence type="ECO:0000255" key="3">
    <source>
        <dbReference type="PROSITE-ProRule" id="PRU00084"/>
    </source>
</evidence>
<evidence type="ECO:0000255" key="4">
    <source>
        <dbReference type="PROSITE-ProRule" id="PRU00159"/>
    </source>
</evidence>
<evidence type="ECO:0000255" key="5">
    <source>
        <dbReference type="PROSITE-ProRule" id="PRU00191"/>
    </source>
</evidence>
<evidence type="ECO:0000255" key="6">
    <source>
        <dbReference type="PROSITE-ProRule" id="PRU10028"/>
    </source>
</evidence>
<evidence type="ECO:0000269" key="7">
    <source>
    </source>
</evidence>
<evidence type="ECO:0000269" key="8">
    <source>
    </source>
</evidence>
<evidence type="ECO:0000269" key="9">
    <source>
    </source>
</evidence>
<evidence type="ECO:0000269" key="10">
    <source>
    </source>
</evidence>
<evidence type="ECO:0000269" key="11">
    <source>
    </source>
</evidence>
<evidence type="ECO:0000269" key="12">
    <source>
    </source>
</evidence>
<evidence type="ECO:0000269" key="13">
    <source>
    </source>
</evidence>
<evidence type="ECO:0000269" key="14">
    <source>
    </source>
</evidence>
<evidence type="ECO:0000269" key="15">
    <source>
    </source>
</evidence>
<evidence type="ECO:0000269" key="16">
    <source>
    </source>
</evidence>
<evidence type="ECO:0000269" key="17">
    <source>
    </source>
</evidence>
<evidence type="ECO:0000269" key="18">
    <source>
    </source>
</evidence>
<evidence type="ECO:0000269" key="19">
    <source>
    </source>
</evidence>
<evidence type="ECO:0000269" key="20">
    <source>
    </source>
</evidence>
<evidence type="ECO:0000269" key="21">
    <source>
    </source>
</evidence>
<evidence type="ECO:0000269" key="22">
    <source>
    </source>
</evidence>
<evidence type="ECO:0000269" key="23">
    <source>
    </source>
</evidence>
<evidence type="ECO:0000269" key="24">
    <source>
    </source>
</evidence>
<evidence type="ECO:0000269" key="25">
    <source>
    </source>
</evidence>
<evidence type="ECO:0000269" key="26">
    <source>
    </source>
</evidence>
<evidence type="ECO:0000269" key="27">
    <source>
    </source>
</evidence>
<evidence type="ECO:0000269" key="28">
    <source>
    </source>
</evidence>
<evidence type="ECO:0000269" key="29">
    <source>
    </source>
</evidence>
<evidence type="ECO:0000269" key="30">
    <source>
    </source>
</evidence>
<evidence type="ECO:0000269" key="31">
    <source>
    </source>
</evidence>
<evidence type="ECO:0000269" key="32">
    <source>
    </source>
</evidence>
<evidence type="ECO:0000269" key="33">
    <source>
    </source>
</evidence>
<evidence type="ECO:0000269" key="34">
    <source>
    </source>
</evidence>
<evidence type="ECO:0000269" key="35">
    <source>
    </source>
</evidence>
<evidence type="ECO:0000269" key="36">
    <source>
    </source>
</evidence>
<evidence type="ECO:0000305" key="37"/>
<evidence type="ECO:0000305" key="38">
    <source>
    </source>
</evidence>
<evidence type="ECO:0000305" key="39">
    <source>
    </source>
</evidence>
<evidence type="ECO:0000312" key="40">
    <source>
        <dbReference type="HGNC" id="HGNC:6192"/>
    </source>
</evidence>
<evidence type="ECO:0007744" key="41">
    <source>
    </source>
</evidence>
<evidence type="ECO:0007829" key="42">
    <source>
        <dbReference type="PDB" id="4E4M"/>
    </source>
</evidence>
<evidence type="ECO:0007829" key="43">
    <source>
        <dbReference type="PDB" id="4IVA"/>
    </source>
</evidence>
<evidence type="ECO:0007829" key="44">
    <source>
        <dbReference type="PDB" id="4Z32"/>
    </source>
</evidence>
<evidence type="ECO:0007829" key="45">
    <source>
        <dbReference type="PDB" id="5HEZ"/>
    </source>
</evidence>
<evidence type="ECO:0007829" key="46">
    <source>
        <dbReference type="PDB" id="6DRW"/>
    </source>
</evidence>
<evidence type="ECO:0007829" key="47">
    <source>
        <dbReference type="PDB" id="6E2Q"/>
    </source>
</evidence>
<evidence type="ECO:0007829" key="48">
    <source>
        <dbReference type="PDB" id="6G3C"/>
    </source>
</evidence>
<evidence type="ECO:0007829" key="49">
    <source>
        <dbReference type="PDB" id="7LL4"/>
    </source>
</evidence>
<evidence type="ECO:0007829" key="50">
    <source>
        <dbReference type="PDB" id="7Q7K"/>
    </source>
</evidence>
<evidence type="ECO:0007829" key="51">
    <source>
        <dbReference type="PDB" id="8BA3"/>
    </source>
</evidence>
<evidence type="ECO:0007829" key="52">
    <source>
        <dbReference type="PDB" id="8BX9"/>
    </source>
</evidence>
<evidence type="ECO:0007829" key="53">
    <source>
        <dbReference type="PDB" id="8BXH"/>
    </source>
</evidence>
<evidence type="ECO:0007829" key="54">
    <source>
        <dbReference type="PDB" id="8C0A"/>
    </source>
</evidence>
<name>JAK2_HUMAN</name>
<protein>
    <recommendedName>
        <fullName evidence="37">Tyrosine-protein kinase JAK2</fullName>
        <ecNumber evidence="10 15 33 35 36">2.7.10.2</ecNumber>
    </recommendedName>
    <alternativeName>
        <fullName>Janus kinase 2</fullName>
        <shortName>JAK-2</shortName>
    </alternativeName>
</protein>